<organism>
    <name type="scientific">Homo sapiens</name>
    <name type="common">Human</name>
    <dbReference type="NCBI Taxonomy" id="9606"/>
    <lineage>
        <taxon>Eukaryota</taxon>
        <taxon>Metazoa</taxon>
        <taxon>Chordata</taxon>
        <taxon>Craniata</taxon>
        <taxon>Vertebrata</taxon>
        <taxon>Euteleostomi</taxon>
        <taxon>Mammalia</taxon>
        <taxon>Eutheria</taxon>
        <taxon>Euarchontoglires</taxon>
        <taxon>Primates</taxon>
        <taxon>Haplorrhini</taxon>
        <taxon>Catarrhini</taxon>
        <taxon>Hominidae</taxon>
        <taxon>Homo</taxon>
    </lineage>
</organism>
<accession>Q14671</accession>
<accession>A8K6W4</accession>
<accession>B4DG92</accession>
<accession>D3DPN3</accession>
<accession>E9PCJ0</accession>
<accession>Q53HH5</accession>
<accession>Q5VXY7</accession>
<accession>Q9HAN1</accession>
<name>PUM1_HUMAN</name>
<evidence type="ECO:0000250" key="1">
    <source>
        <dbReference type="UniProtKB" id="Q80U78"/>
    </source>
</evidence>
<evidence type="ECO:0000250" key="2">
    <source>
        <dbReference type="UniProtKB" id="Q8TB72"/>
    </source>
</evidence>
<evidence type="ECO:0000255" key="3">
    <source>
        <dbReference type="PROSITE-ProRule" id="PRU00317"/>
    </source>
</evidence>
<evidence type="ECO:0000255" key="4">
    <source>
        <dbReference type="PROSITE-ProRule" id="PRU00318"/>
    </source>
</evidence>
<evidence type="ECO:0000256" key="5">
    <source>
        <dbReference type="SAM" id="MobiDB-lite"/>
    </source>
</evidence>
<evidence type="ECO:0000269" key="6">
    <source>
    </source>
</evidence>
<evidence type="ECO:0000269" key="7">
    <source>
    </source>
</evidence>
<evidence type="ECO:0000269" key="8">
    <source>
    </source>
</evidence>
<evidence type="ECO:0000269" key="9">
    <source>
    </source>
</evidence>
<evidence type="ECO:0000269" key="10">
    <source>
    </source>
</evidence>
<evidence type="ECO:0000269" key="11">
    <source>
    </source>
</evidence>
<evidence type="ECO:0000269" key="12">
    <source>
    </source>
</evidence>
<evidence type="ECO:0000269" key="13">
    <source>
    </source>
</evidence>
<evidence type="ECO:0000269" key="14">
    <source>
    </source>
</evidence>
<evidence type="ECO:0000269" key="15">
    <source>
    </source>
</evidence>
<evidence type="ECO:0000269" key="16">
    <source>
    </source>
</evidence>
<evidence type="ECO:0000269" key="17">
    <source>
    </source>
</evidence>
<evidence type="ECO:0000269" key="18">
    <source>
    </source>
</evidence>
<evidence type="ECO:0000269" key="19">
    <source>
    </source>
</evidence>
<evidence type="ECO:0000269" key="20">
    <source>
    </source>
</evidence>
<evidence type="ECO:0000269" key="21">
    <source>
    </source>
</evidence>
<evidence type="ECO:0000269" key="22">
    <source>
    </source>
</evidence>
<evidence type="ECO:0000269" key="23">
    <source>
    </source>
</evidence>
<evidence type="ECO:0000269" key="24">
    <source>
    </source>
</evidence>
<evidence type="ECO:0000269" key="25">
    <source>
    </source>
</evidence>
<evidence type="ECO:0000269" key="26">
    <source>
    </source>
</evidence>
<evidence type="ECO:0000303" key="27">
    <source>
    </source>
</evidence>
<evidence type="ECO:0000303" key="28">
    <source>
    </source>
</evidence>
<evidence type="ECO:0000303" key="29">
    <source ref="4"/>
</evidence>
<evidence type="ECO:0000305" key="30"/>
<evidence type="ECO:0000305" key="31">
    <source>
    </source>
</evidence>
<evidence type="ECO:0000305" key="32">
    <source>
    </source>
</evidence>
<evidence type="ECO:0000312" key="33">
    <source>
        <dbReference type="HGNC" id="HGNC:14957"/>
    </source>
</evidence>
<evidence type="ECO:0007744" key="34">
    <source>
        <dbReference type="PDB" id="1M8W"/>
    </source>
</evidence>
<evidence type="ECO:0007744" key="35">
    <source>
        <dbReference type="PDB" id="1M8X"/>
    </source>
</evidence>
<evidence type="ECO:0007744" key="36">
    <source>
        <dbReference type="PDB" id="3BSB"/>
    </source>
</evidence>
<evidence type="ECO:0007744" key="37">
    <source>
        <dbReference type="PDB" id="3BSX"/>
    </source>
</evidence>
<evidence type="ECO:0007744" key="38">
    <source>
        <dbReference type="PDB" id="3Q0L"/>
    </source>
</evidence>
<evidence type="ECO:0007744" key="39">
    <source>
        <dbReference type="PDB" id="3Q0M"/>
    </source>
</evidence>
<evidence type="ECO:0007744" key="40">
    <source>
        <dbReference type="PDB" id="3Q0N"/>
    </source>
</evidence>
<evidence type="ECO:0007744" key="41">
    <source>
        <dbReference type="PDB" id="3Q0O"/>
    </source>
</evidence>
<evidence type="ECO:0007744" key="42">
    <source>
        <dbReference type="PDB" id="3Q0P"/>
    </source>
</evidence>
<evidence type="ECO:0007744" key="43">
    <source>
    </source>
</evidence>
<evidence type="ECO:0007744" key="44">
    <source>
    </source>
</evidence>
<evidence type="ECO:0007744" key="45">
    <source>
    </source>
</evidence>
<evidence type="ECO:0007744" key="46">
    <source>
    </source>
</evidence>
<evidence type="ECO:0007744" key="47">
    <source>
    </source>
</evidence>
<evidence type="ECO:0007744" key="48">
    <source>
    </source>
</evidence>
<evidence type="ECO:0007744" key="49">
    <source>
    </source>
</evidence>
<evidence type="ECO:0007744" key="50">
    <source>
    </source>
</evidence>
<evidence type="ECO:0007744" key="51">
    <source>
    </source>
</evidence>
<evidence type="ECO:0007829" key="52">
    <source>
        <dbReference type="PDB" id="1IB2"/>
    </source>
</evidence>
<evidence type="ECO:0007829" key="53">
    <source>
        <dbReference type="PDB" id="1M8Z"/>
    </source>
</evidence>
<evidence type="ECO:0007829" key="54">
    <source>
        <dbReference type="PDB" id="2YJY"/>
    </source>
</evidence>
<evidence type="ECO:0007829" key="55">
    <source>
        <dbReference type="PDB" id="3BSB"/>
    </source>
</evidence>
<evidence type="ECO:0007829" key="56">
    <source>
        <dbReference type="PDB" id="3Q0M"/>
    </source>
</evidence>
<evidence type="ECO:0007829" key="57">
    <source>
        <dbReference type="PDB" id="3Q0N"/>
    </source>
</evidence>
<evidence type="ECO:0007829" key="58">
    <source>
        <dbReference type="PDB" id="5YKH"/>
    </source>
</evidence>
<protein>
    <recommendedName>
        <fullName evidence="30">Pumilio homolog 1</fullName>
        <shortName>HsPUM</shortName>
        <shortName>Pumilio-1</shortName>
    </recommendedName>
</protein>
<keyword id="KW-0002">3D-structure</keyword>
<keyword id="KW-0007">Acetylation</keyword>
<keyword id="KW-0025">Alternative splicing</keyword>
<keyword id="KW-0963">Cytoplasm</keyword>
<keyword id="KW-0221">Differentiation</keyword>
<keyword id="KW-0225">Disease variant</keyword>
<keyword id="KW-0887">Epilepsy</keyword>
<keyword id="KW-0991">Intellectual disability</keyword>
<keyword id="KW-0488">Methylation</keyword>
<keyword id="KW-0523">Neurodegeneration</keyword>
<keyword id="KW-0597">Phosphoprotein</keyword>
<keyword id="KW-1267">Proteomics identification</keyword>
<keyword id="KW-1185">Reference proteome</keyword>
<keyword id="KW-0677">Repeat</keyword>
<keyword id="KW-0694">RNA-binding</keyword>
<keyword id="KW-0744">Spermatogenesis</keyword>
<keyword id="KW-0950">Spinocerebellar ataxia</keyword>
<keyword id="KW-0810">Translation regulation</keyword>
<comment type="function">
    <text evidence="1 9 10 11 12 13 14 15 16 17 19 20 21 22 23">Sequence-specific RNA-binding protein that acts as a post-transcriptional repressor by binding the 3'-UTR of mRNA targets. Binds to an RNA consensus sequence, the Pumilio Response Element (PRE), 5'-UGUANAUA-3', that is related to the Nanos Response Element (NRE) (PubMed:18328718, PubMed:21397187, PubMed:21572425, PubMed:21653694). Mediates post-transcriptional repression of transcripts via different mechanisms: acts via direct recruitment of the CCR4-POP2-NOT deadenylase leading to translational inhibition and mRNA degradation (PubMed:22955276). Also mediates deadenylation-independent repression by promoting accessibility of miRNAs (PubMed:18776931, PubMed:20818387, PubMed:20860814, PubMed:22345517). Following growth factor stimulation, phosphorylated and binds to the 3'-UTR of CDKN1B/p27 mRNA, inducing a local conformational change that exposes miRNA-binding sites, promoting association of miR-221 and miR-222, efficient suppression of CDKN1B/p27 expression, and rapid entry to the cell cycle (PubMed:20818387). Acts as a post-transcriptional repressor of E2F3 mRNAs by binding to its 3'-UTR and facilitating miRNA regulation (PubMed:22345517, PubMed:29474920). Represses a program of genes necessary to maintain genomic stability such as key mitotic, DNA repair and DNA replication factors. Its ability to repress those target mRNAs is regulated by the lncRNA NORAD (non-coding RNA activated by DNA damage) which, due to its high abundance and multitude of PUMILIO binding sites, is able to sequester a significant fraction of PUM1 and PUM2 in the cytoplasm (PubMed:26724866). Involved in neuronal functions by regulating ATXN1 mRNA levels: acts by binding to the 3'-UTR of ATXN1 transcripts, leading to their down-regulation independently of the miRNA machinery (PubMed:25768905, PubMed:29474920). Plays a role in cytoplasmic sensing of viral infection (PubMed:25340845). In testis, acts as a post-transcriptional regulator of spermatogenesis by binding to the 3'-UTR of mRNAs coding for regulators of p53/TP53. Involved in embryonic stem cell renewal by facilitating the exit from the ground state: acts by targeting mRNAs coding for naive pluripotency transcription factors and accelerates their down-regulation at the onset of differentiation (By similarity). Binds specifically to miRNA MIR199A precursor, with PUM2, regulates miRNA MIR199A expression at a postranscriptional level (PubMed:28431233).</text>
</comment>
<comment type="subunit">
    <text evidence="17 18 19">Recruits the CCR4-POP2-NOT deadenylase leading to translational inhibition and mRNA degradation (PubMed:22955276). In case of viral infection, interacts with DHX58 (PubMed:25340845). Interacts with TRIM71 (via NHL repeats) in an RNA-dependent manner (PubMed:23125361).</text>
</comment>
<comment type="interaction">
    <interactant intactId="EBI-948453">
        <id>Q14671</id>
    </interactant>
    <interactant intactId="EBI-15639515">
        <id>O15354</id>
        <label>GPR37</label>
    </interactant>
    <organismsDiffer>false</organismsDiffer>
    <experiments>3</experiments>
</comment>
<comment type="interaction">
    <interactant intactId="EBI-948453">
        <id>Q14671</id>
    </interactant>
    <interactant intactId="EBI-747754">
        <id>P28799</id>
        <label>GRN</label>
    </interactant>
    <organismsDiffer>false</organismsDiffer>
    <experiments>3</experiments>
</comment>
<comment type="interaction">
    <interactant intactId="EBI-948453">
        <id>Q14671</id>
    </interactant>
    <interactant intactId="EBI-25860013">
        <id>P28799-2</id>
        <label>GRN</label>
    </interactant>
    <organismsDiffer>false</organismsDiffer>
    <experiments>3</experiments>
</comment>
<comment type="interaction">
    <interactant intactId="EBI-948453">
        <id>Q14671</id>
    </interactant>
    <interactant intactId="EBI-476295">
        <id>P31947</id>
        <label>SFN</label>
    </interactant>
    <organismsDiffer>false</organismsDiffer>
    <experiments>4</experiments>
</comment>
<comment type="interaction">
    <interactant intactId="EBI-948453">
        <id>Q14671</id>
    </interactant>
    <interactant intactId="EBI-720609">
        <id>O76024</id>
        <label>WFS1</label>
    </interactant>
    <organismsDiffer>false</organismsDiffer>
    <experiments>3</experiments>
</comment>
<comment type="interaction">
    <interactant intactId="EBI-948453">
        <id>Q14671</id>
    </interactant>
    <interactant intactId="EBI-356498">
        <id>P62258</id>
        <label>YWHAE</label>
    </interactant>
    <organismsDiffer>false</organismsDiffer>
    <experiments>5</experiments>
</comment>
<comment type="subcellular location">
    <subcellularLocation>
        <location evidence="32">Cytoplasm</location>
    </subcellularLocation>
    <subcellularLocation>
        <location evidence="31">Cytoplasm</location>
        <location evidence="31">P-body</location>
    </subcellularLocation>
    <subcellularLocation>
        <location evidence="19">Cytoplasmic granule</location>
    </subcellularLocation>
    <text evidence="19">Recruited to cytoplasmic stress granules upon viral infection.</text>
</comment>
<comment type="alternative products">
    <event type="alternative splicing"/>
    <isoform>
        <id>Q14671-1</id>
        <name>1</name>
        <sequence type="displayed"/>
    </isoform>
    <isoform>
        <id>Q14671-2</id>
        <name>2</name>
        <sequence type="described" ref="VSP_017059 VSP_017060 VSP_017061"/>
    </isoform>
    <isoform>
        <id>Q14671-3</id>
        <name>3</name>
        <sequence type="described" ref="VSP_017061"/>
    </isoform>
    <isoform>
        <id>Q14671-4</id>
        <name>4</name>
        <sequence type="described" ref="VSP_053703 VSP_053704 VSP_017059"/>
    </isoform>
</comment>
<comment type="tissue specificity">
    <text evidence="7">Expressed in brain, heart, kidney, muscle, intestine and stomach. Not expressed in cerebellum, corpus callosum, caudate nucleus, hippocampus, medulla oblongata and putamen. Expressed in all fetal tissues tested.</text>
</comment>
<comment type="induction">
    <text evidence="8">Strongly down-regulated in keratinocytes upon UVB irradiation.</text>
</comment>
<comment type="domain">
    <text evidence="9 13 14 15">The pumilio repeats mediate the association with RNA by packing together to form a right-handed superhelix that approximates a half donut. RNA-binding occurs on the concave side of the surface (PubMed:21397187). PUM1 is composed of 8 pumilio repeats of 36 residues; each repeat binds a single nucleotide in its RNA target. Residues at positions 12 and 16 of the pumilio repeat bind each RNA base via hydrogen bonding or van der Waals contacts with the Watson-Crick edge, while the amino acid at position 13 makes a stacking interaction. The recognition of RNA by pumilio repeats is base specific: cysteine and glutamine at position 12 and 16, respectively, bind adenine; asparagine and glutamine bind uracil; and serine and glutamate bind guanine (PubMed:18328718, PubMed:21572425, PubMed:21653694).</text>
</comment>
<comment type="PTM">
    <text evidence="11">Phosphorylation at Ser-714 promotes RNA-binding activity. Following growth factor stimulation phosphorylated at Ser-714, promoting binding to the 3'-UTR of CDKN1B/p27 mRNA.</text>
</comment>
<comment type="disease" evidence="23">
    <disease id="DI-05237">
        <name>Spinocerebellar ataxia 47</name>
        <acronym>SCA47</acronym>
        <description>A form of spinocerebellar ataxia, a clinically and genetically heterogeneous group of cerebellar disorders. Patients show progressive incoordination of gait and often poor coordination of hands, speech and eye movements, due to degeneration of the cerebellum with variable involvement of the brainstem and spinal cord. SCA47 is an autosomal dominant disease with a highly variable phenotype and incomplete penetrance. Clinical features include developmental disability, ataxia, and seizures.</description>
        <dbReference type="MIM" id="617931"/>
    </disease>
    <text>The disease is caused by variants affecting the gene represented in this entry.</text>
</comment>
<comment type="disease" evidence="23 24 25 26">
    <disease id="DI-06849">
        <name>Neurodevelopmental disorder with motor abnormalities, seizures, and facial dysmorphism</name>
        <acronym>NEDMSF</acronym>
        <description>An autosomal dominant disorder characterized by global developmental delay, impaired intellectual development, early-onset seizures, poor overall growth, delayed walking, hypotonia and/or ataxia, and facial dysmorphism. Some patients have hypoplasia of the corpus callosum and cerebral atrophy.</description>
        <dbReference type="MIM" id="620719"/>
    </disease>
    <text>The disease is caused by variants affecting the gene represented in this entry.</text>
</comment>
<comment type="sequence caution" evidence="30">
    <conflict type="erroneous initiation">
        <sequence resource="EMBL-CDS" id="BAA07895"/>
    </conflict>
    <text>Extended N-terminus.</text>
</comment>
<feature type="initiator methionine" description="Removed" evidence="48">
    <location>
        <position position="1"/>
    </location>
</feature>
<feature type="chain" id="PRO_0000075917" description="Pumilio homolog 1">
    <location>
        <begin position="2"/>
        <end position="1186"/>
    </location>
</feature>
<feature type="domain" description="PUM-HD" evidence="4">
    <location>
        <begin position="828"/>
        <end position="1168"/>
    </location>
</feature>
<feature type="repeat" description="Pumilio 1" evidence="3 13">
    <location>
        <begin position="848"/>
        <end position="883"/>
    </location>
</feature>
<feature type="repeat" description="Pumilio 2" evidence="3 13">
    <location>
        <begin position="884"/>
        <end position="919"/>
    </location>
</feature>
<feature type="repeat" description="Pumilio 3" evidence="3 13">
    <location>
        <begin position="920"/>
        <end position="955"/>
    </location>
</feature>
<feature type="repeat" description="Pumilio 4" evidence="3 13">
    <location>
        <begin position="956"/>
        <end position="991"/>
    </location>
</feature>
<feature type="repeat" description="Pumilio 5" evidence="3 13">
    <location>
        <begin position="992"/>
        <end position="1027"/>
    </location>
</feature>
<feature type="repeat" description="Pumilio 6" evidence="3 13">
    <location>
        <begin position="1028"/>
        <end position="1063"/>
    </location>
</feature>
<feature type="repeat" description="Pumilio 7" evidence="3 13">
    <location>
        <begin position="1064"/>
        <end position="1099"/>
    </location>
</feature>
<feature type="repeat" description="Pumilio 8" evidence="3 13">
    <location>
        <begin position="1103"/>
        <end position="1142"/>
    </location>
</feature>
<feature type="region of interest" description="Disordered" evidence="5">
    <location>
        <begin position="22"/>
        <end position="73"/>
    </location>
</feature>
<feature type="region of interest" description="Disordered" evidence="5">
    <location>
        <begin position="233"/>
        <end position="272"/>
    </location>
</feature>
<feature type="region of interest" description="Disordered" evidence="5">
    <location>
        <begin position="485"/>
        <end position="524"/>
    </location>
</feature>
<feature type="region of interest" description="Disordered" evidence="5">
    <location>
        <begin position="613"/>
        <end position="648"/>
    </location>
</feature>
<feature type="region of interest" description="Disordered" evidence="5">
    <location>
        <begin position="742"/>
        <end position="773"/>
    </location>
</feature>
<feature type="region of interest" description="Adenine-nucleotide binding in RNA target" evidence="9">
    <location>
        <begin position="863"/>
        <end position="867"/>
    </location>
</feature>
<feature type="region of interest" description="Uracil-nucleotide binding in RNA target" evidence="9">
    <location>
        <begin position="899"/>
        <end position="903"/>
    </location>
</feature>
<feature type="region of interest" description="Adenine-nucleotide binding in RNA target" evidence="9">
    <location>
        <begin position="935"/>
        <end position="939"/>
    </location>
</feature>
<feature type="region of interest" description="Non-specific-nucleotide binding in RNA target" evidence="9">
    <location>
        <begin position="971"/>
        <end position="975"/>
    </location>
</feature>
<feature type="region of interest" description="Adenine-nucleotide binding in RNA target" evidence="9">
    <location>
        <begin position="1007"/>
        <end position="1011"/>
    </location>
</feature>
<feature type="region of interest" description="Uracil-nucleotide binding in RNA target" evidence="9 13 36">
    <location>
        <begin position="1043"/>
        <end position="1047"/>
    </location>
</feature>
<feature type="region of interest" description="Guanine-nucleotide binding in RNA target" evidence="9 13 36">
    <location>
        <begin position="1079"/>
        <end position="1083"/>
    </location>
</feature>
<feature type="region of interest" description="Uracil-nucleotide binding in RNA target" evidence="9 13 34 35 36 37 38 39 40 41 42">
    <location>
        <begin position="1122"/>
        <end position="1126"/>
    </location>
</feature>
<feature type="compositionally biased region" description="Low complexity" evidence="5">
    <location>
        <begin position="45"/>
        <end position="58"/>
    </location>
</feature>
<feature type="compositionally biased region" description="Basic and acidic residues" evidence="5">
    <location>
        <begin position="250"/>
        <end position="272"/>
    </location>
</feature>
<feature type="compositionally biased region" description="Low complexity" evidence="5">
    <location>
        <begin position="485"/>
        <end position="502"/>
    </location>
</feature>
<feature type="compositionally biased region" description="Polar residues" evidence="5">
    <location>
        <begin position="511"/>
        <end position="524"/>
    </location>
</feature>
<feature type="compositionally biased region" description="Low complexity" evidence="5">
    <location>
        <begin position="626"/>
        <end position="639"/>
    </location>
</feature>
<feature type="compositionally biased region" description="Low complexity" evidence="5">
    <location>
        <begin position="763"/>
        <end position="773"/>
    </location>
</feature>
<feature type="modified residue" description="N-acetylserine" evidence="48">
    <location>
        <position position="2"/>
    </location>
</feature>
<feature type="modified residue" description="Phosphoserine" evidence="44">
    <location>
        <position position="19"/>
    </location>
</feature>
<feature type="modified residue" description="Phosphoserine" evidence="44 45 47 49">
    <location>
        <position position="75"/>
    </location>
</feature>
<feature type="modified residue" description="Phosphoserine" evidence="46">
    <location>
        <position position="98"/>
    </location>
</feature>
<feature type="modified residue" description="Phosphoserine" evidence="46">
    <location>
        <position position="106"/>
    </location>
</feature>
<feature type="modified residue" description="Phosphothreonine" evidence="49">
    <location>
        <position position="112"/>
    </location>
</feature>
<feature type="modified residue" description="Phosphoserine" evidence="49 51">
    <location>
        <position position="124"/>
    </location>
</feature>
<feature type="modified residue" description="Phosphoserine" evidence="49">
    <location>
        <position position="159"/>
    </location>
</feature>
<feature type="modified residue" description="Phosphoserine" evidence="49">
    <location>
        <position position="197"/>
    </location>
</feature>
<feature type="modified residue" description="Phosphoserine" evidence="11 43 44 45 46 49">
    <location>
        <position position="209"/>
    </location>
</feature>
<feature type="modified residue" description="Phosphoserine" evidence="51">
    <location>
        <position position="229"/>
    </location>
</feature>
<feature type="modified residue" description="Phosphoserine" evidence="2">
    <location>
        <position position="305"/>
    </location>
</feature>
<feature type="modified residue" description="Phosphothreonine" evidence="2">
    <location>
        <position position="514"/>
    </location>
</feature>
<feature type="modified residue" description="Phosphoserine" evidence="44 45 46 47 49">
    <location>
        <position position="709"/>
    </location>
</feature>
<feature type="modified residue" description="Phosphoserine" evidence="11">
    <location>
        <position position="714"/>
    </location>
</feature>
<feature type="modified residue" description="Omega-N-methylarginine" evidence="50">
    <location>
        <position position="796"/>
    </location>
</feature>
<feature type="modified residue" description="Phosphoserine" evidence="45 49">
    <location>
        <position position="806"/>
    </location>
</feature>
<feature type="modified residue" description="Phosphoserine" evidence="49">
    <location>
        <position position="822"/>
    </location>
</feature>
<feature type="splice variant" id="VSP_053703" description="In isoform 4." evidence="27">
    <original>M</original>
    <variation>MPLPPPGPGPEPIPGCTAPTQSPVGRHVVGVKGVGGM</variation>
    <location>
        <position position="1"/>
    </location>
</feature>
<feature type="splice variant" id="VSP_053704" description="In isoform 4." evidence="27">
    <location>
        <begin position="145"/>
        <end position="240"/>
    </location>
</feature>
<feature type="splice variant" id="VSP_017059" description="In isoform 2 and isoform 4." evidence="27 28">
    <original>I</original>
    <variation>IA</variation>
    <location>
        <position position="417"/>
    </location>
</feature>
<feature type="splice variant" id="VSP_017060" description="In isoform 2." evidence="28">
    <location>
        <begin position="597"/>
        <end position="623"/>
    </location>
</feature>
<feature type="splice variant" id="VSP_017061" description="In isoform 2 and isoform 3." evidence="28 29">
    <original>Q</original>
    <variation>QVI</variation>
    <location>
        <position position="950"/>
    </location>
</feature>
<feature type="sequence variant" id="VAR_089371" description="In NEDMSF; likely pathogenic." evidence="25">
    <location>
        <begin position="837"/>
        <end position="1186"/>
    </location>
</feature>
<feature type="sequence variant" id="VAR_080784" description="In SCA47; results in reduced PUM1 protein levels and decreased post-transcriptional repression of E2F3 and ATXN1; dbSNP:rs771145682." evidence="23">
    <original>T</original>
    <variation>S</variation>
    <location>
        <position position="1033"/>
    </location>
</feature>
<feature type="sequence variant" id="VAR_080785" description="In SCA47; decreased post-transcriptional repression of E2F3 and ATXN1; dbSNP:rs1557541619." evidence="23">
    <original>R</original>
    <variation>W</variation>
    <location>
        <position position="1137"/>
    </location>
</feature>
<feature type="sequence variant" id="VAR_080786" description="In NEDMSF; likely pathogenic; results in reduced PUM1 protein levels and decreased post-transcriptional repression of E2F3 and ATXN1; dbSNP:rs1557539450." evidence="23 24 25 26">
    <original>R</original>
    <variation>W</variation>
    <location>
        <position position="1145"/>
    </location>
</feature>
<feature type="mutagenesis site" description="Does not affect RNA-binding activity." evidence="11">
    <original>S</original>
    <variation>A</variation>
    <location>
        <position position="209"/>
    </location>
</feature>
<feature type="mutagenesis site" description="Decreased RNA-binding activity." evidence="11">
    <original>S</original>
    <variation>A</variation>
    <location>
        <position position="714"/>
    </location>
</feature>
<feature type="mutagenesis site" description="Phospho-mimic mutant; persistent RNA-binding activity in quiescent cells." evidence="11">
    <original>S</original>
    <variation>E</variation>
    <location>
        <position position="714"/>
    </location>
</feature>
<feature type="mutagenesis site" description="B and inds cytosine-nucleotide in RNA target." evidence="14">
    <original>SRFIQ</original>
    <variation>GRFIR</variation>
    <location>
        <begin position="863"/>
        <end position="867"/>
    </location>
</feature>
<feature type="mutagenesis site" description="Specifically binds cytosine-nucleotide in RNA target." evidence="14">
    <original>NYVIQ</original>
    <variation>GYVIR</variation>
    <location>
        <begin position="899"/>
        <end position="903"/>
    </location>
</feature>
<feature type="mutagenesis site" description="Specifically binds cytosine-nucleotide in RNA target." evidence="14">
    <original>CRVIQ</original>
    <variation>GRVIR</variation>
    <location>
        <begin position="935"/>
        <end position="939"/>
    </location>
</feature>
<feature type="mutagenesis site" description="Specifically binds cytosine-nucleotide in RNA target." evidence="14">
    <original>NHVVQ</original>
    <variation>GHVVR</variation>
    <location>
        <begin position="971"/>
        <end position="975"/>
    </location>
</feature>
<feature type="mutagenesis site" description="Specifically binds cytosine-nucleotide in RNA target." evidence="14">
    <original>CRVIQ</original>
    <variation>GRVIR</variation>
    <variation>ARVIR</variation>
    <variation>SRVIR</variation>
    <variation>TRVIR</variation>
    <variation>CRVIR</variation>
    <location>
        <begin position="1007"/>
        <end position="1011"/>
    </location>
</feature>
<feature type="mutagenesis site" description="Specifically binds guanine-nucleotide in RNA target." evidence="14">
    <original>CRVIQ</original>
    <variation>SRVIE</variation>
    <location>
        <begin position="1007"/>
        <end position="1011"/>
    </location>
</feature>
<feature type="mutagenesis site" description="Specifically binds uracil-nucleotide in RNA target." evidence="14">
    <original>C</original>
    <variation>N</variation>
    <location>
        <position position="1007"/>
    </location>
</feature>
<feature type="mutagenesis site" description="Specifically binds cytosine-nucleotide in RNA target." evidence="14">
    <original>NYVIQ</original>
    <variation>GYVIR</variation>
    <location>
        <begin position="1043"/>
        <end position="1047"/>
    </location>
</feature>
<feature type="mutagenesis site" description="Changes the specificity for RNA; when associated with E-1047." evidence="6">
    <original>NY</original>
    <variation>SN</variation>
    <location>
        <begin position="1043"/>
        <end position="1044"/>
    </location>
</feature>
<feature type="mutagenesis site" description="Changes the specificity for RNA; when associated with 1043-SN-1044." evidence="6">
    <original>Q</original>
    <variation>E</variation>
    <location>
        <position position="1047"/>
    </location>
</feature>
<feature type="mutagenesis site" description="Specifically binds cytosine-nucleotide in RNA target." evidence="14">
    <original>SNVVE</original>
    <variation>GNVVR</variation>
    <location>
        <begin position="1079"/>
        <end position="1083"/>
    </location>
</feature>
<feature type="mutagenesis site" description="Specifically binds cytosine-nucleotide in RNA target." evidence="14">
    <original>NYVVQ</original>
    <variation>GYVVR</variation>
    <location>
        <begin position="1122"/>
        <end position="1126"/>
    </location>
</feature>
<feature type="sequence conflict" description="In Ref. 4; BAD96325." evidence="30" ref="4">
    <original>G</original>
    <variation>E</variation>
    <location>
        <position position="216"/>
    </location>
</feature>
<feature type="sequence conflict" description="In Ref. 4; BAD96325." evidence="30" ref="4">
    <original>Y</original>
    <variation>N</variation>
    <location>
        <position position="469"/>
    </location>
</feature>
<feature type="sequence conflict" description="In Ref. 2; BAA07895." evidence="30" ref="2">
    <original>M</original>
    <variation>N</variation>
    <location>
        <position position="893"/>
    </location>
</feature>
<feature type="helix" evidence="52">
    <location>
        <begin position="831"/>
        <end position="837"/>
    </location>
</feature>
<feature type="helix" evidence="52">
    <location>
        <begin position="846"/>
        <end position="849"/>
    </location>
</feature>
<feature type="turn" evidence="54">
    <location>
        <begin position="850"/>
        <end position="852"/>
    </location>
</feature>
<feature type="helix" evidence="52">
    <location>
        <begin position="853"/>
        <end position="857"/>
    </location>
</feature>
<feature type="helix" evidence="52">
    <location>
        <begin position="860"/>
        <end position="872"/>
    </location>
</feature>
<feature type="helix" evidence="52">
    <location>
        <begin position="875"/>
        <end position="885"/>
    </location>
</feature>
<feature type="helix" evidence="52">
    <location>
        <begin position="886"/>
        <end position="888"/>
    </location>
</feature>
<feature type="helix" evidence="52">
    <location>
        <begin position="889"/>
        <end position="893"/>
    </location>
</feature>
<feature type="helix" evidence="52">
    <location>
        <begin position="898"/>
        <end position="908"/>
    </location>
</feature>
<feature type="helix" evidence="52">
    <location>
        <begin position="911"/>
        <end position="921"/>
    </location>
</feature>
<feature type="helix" evidence="52">
    <location>
        <begin position="925"/>
        <end position="929"/>
    </location>
</feature>
<feature type="helix" evidence="52">
    <location>
        <begin position="934"/>
        <end position="944"/>
    </location>
</feature>
<feature type="helix" evidence="52">
    <location>
        <begin position="947"/>
        <end position="954"/>
    </location>
</feature>
<feature type="helix" evidence="52">
    <location>
        <begin position="955"/>
        <end position="957"/>
    </location>
</feature>
<feature type="helix" evidence="58">
    <location>
        <begin position="958"/>
        <end position="960"/>
    </location>
</feature>
<feature type="helix" evidence="52">
    <location>
        <begin position="961"/>
        <end position="966"/>
    </location>
</feature>
<feature type="helix" evidence="52">
    <location>
        <begin position="970"/>
        <end position="980"/>
    </location>
</feature>
<feature type="helix" evidence="52">
    <location>
        <begin position="983"/>
        <end position="986"/>
    </location>
</feature>
<feature type="helix" evidence="52">
    <location>
        <begin position="987"/>
        <end position="992"/>
    </location>
</feature>
<feature type="turn" evidence="52">
    <location>
        <begin position="993"/>
        <end position="996"/>
    </location>
</feature>
<feature type="helix" evidence="52">
    <location>
        <begin position="997"/>
        <end position="1001"/>
    </location>
</feature>
<feature type="helix" evidence="52">
    <location>
        <begin position="1006"/>
        <end position="1016"/>
    </location>
</feature>
<feature type="helix" evidence="52">
    <location>
        <begin position="1019"/>
        <end position="1031"/>
    </location>
</feature>
<feature type="helix" evidence="52">
    <location>
        <begin position="1033"/>
        <end position="1036"/>
    </location>
</feature>
<feature type="helix" evidence="52">
    <location>
        <begin position="1042"/>
        <end position="1052"/>
    </location>
</feature>
<feature type="helix" evidence="52">
    <location>
        <begin position="1055"/>
        <end position="1065"/>
    </location>
</feature>
<feature type="turn" evidence="56">
    <location>
        <begin position="1066"/>
        <end position="1068"/>
    </location>
</feature>
<feature type="helix" evidence="52">
    <location>
        <begin position="1069"/>
        <end position="1073"/>
    </location>
</feature>
<feature type="helix" evidence="52">
    <location>
        <begin position="1078"/>
        <end position="1088"/>
    </location>
</feature>
<feature type="helix" evidence="52">
    <location>
        <begin position="1091"/>
        <end position="1103"/>
    </location>
</feature>
<feature type="strand" evidence="57">
    <location>
        <begin position="1104"/>
        <end position="1106"/>
    </location>
</feature>
<feature type="strand" evidence="58">
    <location>
        <begin position="1107"/>
        <end position="1109"/>
    </location>
</feature>
<feature type="helix" evidence="52">
    <location>
        <begin position="1111"/>
        <end position="1116"/>
    </location>
</feature>
<feature type="helix" evidence="52">
    <location>
        <begin position="1121"/>
        <end position="1131"/>
    </location>
</feature>
<feature type="helix" evidence="52">
    <location>
        <begin position="1134"/>
        <end position="1142"/>
    </location>
</feature>
<feature type="helix" evidence="53">
    <location>
        <begin position="1145"/>
        <end position="1147"/>
    </location>
</feature>
<feature type="helix" evidence="53">
    <location>
        <begin position="1148"/>
        <end position="1151"/>
    </location>
</feature>
<feature type="strand" evidence="55">
    <location>
        <begin position="1153"/>
        <end position="1155"/>
    </location>
</feature>
<feature type="helix" evidence="53">
    <location>
        <begin position="1157"/>
        <end position="1164"/>
    </location>
</feature>
<feature type="turn" evidence="58">
    <location>
        <begin position="1165"/>
        <end position="1169"/>
    </location>
</feature>
<gene>
    <name evidence="33" type="primary">PUM1</name>
    <name evidence="28" type="synonym">KIAA0099</name>
    <name type="synonym">PUMH1</name>
</gene>
<proteinExistence type="evidence at protein level"/>
<dbReference type="EMBL" id="AF315592">
    <property type="protein sequence ID" value="AAG31807.1"/>
    <property type="molecule type" value="mRNA"/>
</dbReference>
<dbReference type="EMBL" id="D43951">
    <property type="protein sequence ID" value="BAA07895.3"/>
    <property type="status" value="ALT_INIT"/>
    <property type="molecule type" value="mRNA"/>
</dbReference>
<dbReference type="EMBL" id="AL356320">
    <property type="protein sequence ID" value="CAH71203.1"/>
    <property type="molecule type" value="Genomic_DNA"/>
</dbReference>
<dbReference type="EMBL" id="AL445235">
    <property type="protein sequence ID" value="CAH71203.1"/>
    <property type="status" value="JOINED"/>
    <property type="molecule type" value="Genomic_DNA"/>
</dbReference>
<dbReference type="EMBL" id="AK291779">
    <property type="protein sequence ID" value="BAF84468.1"/>
    <property type="molecule type" value="mRNA"/>
</dbReference>
<dbReference type="EMBL" id="AK294477">
    <property type="protein sequence ID" value="BAG57703.1"/>
    <property type="molecule type" value="mRNA"/>
</dbReference>
<dbReference type="EMBL" id="AK222605">
    <property type="protein sequence ID" value="BAD96325.1"/>
    <property type="molecule type" value="mRNA"/>
</dbReference>
<dbReference type="EMBL" id="AL445235">
    <property type="protein sequence ID" value="CAI22246.1"/>
    <property type="molecule type" value="Genomic_DNA"/>
</dbReference>
<dbReference type="EMBL" id="AL356320">
    <property type="protein sequence ID" value="CAI22246.1"/>
    <property type="status" value="JOINED"/>
    <property type="molecule type" value="Genomic_DNA"/>
</dbReference>
<dbReference type="EMBL" id="CH471059">
    <property type="protein sequence ID" value="EAX07633.1"/>
    <property type="molecule type" value="Genomic_DNA"/>
</dbReference>
<dbReference type="EMBL" id="CH471059">
    <property type="protein sequence ID" value="EAX07634.1"/>
    <property type="molecule type" value="Genomic_DNA"/>
</dbReference>
<dbReference type="EMBL" id="BC013398">
    <property type="protein sequence ID" value="AAH13398.1"/>
    <property type="molecule type" value="mRNA"/>
</dbReference>
<dbReference type="CCDS" id="CCDS338.1">
    <molecule id="Q14671-1"/>
</dbReference>
<dbReference type="CCDS" id="CCDS44099.1">
    <molecule id="Q14671-3"/>
</dbReference>
<dbReference type="RefSeq" id="NP_001018494.1">
    <molecule id="Q14671-3"/>
    <property type="nucleotide sequence ID" value="NM_001020658.2"/>
</dbReference>
<dbReference type="RefSeq" id="NP_055491.1">
    <molecule id="Q14671-1"/>
    <property type="nucleotide sequence ID" value="NM_014676.3"/>
</dbReference>
<dbReference type="PDB" id="1IB2">
    <property type="method" value="X-ray"/>
    <property type="resolution" value="1.90 A"/>
    <property type="chains" value="A=828-1176"/>
</dbReference>
<dbReference type="PDB" id="1M8W">
    <property type="method" value="X-ray"/>
    <property type="resolution" value="2.20 A"/>
    <property type="chains" value="A/B=828-1176"/>
</dbReference>
<dbReference type="PDB" id="1M8X">
    <property type="method" value="X-ray"/>
    <property type="resolution" value="2.20 A"/>
    <property type="chains" value="A/B=828-1176"/>
</dbReference>
<dbReference type="PDB" id="1M8Y">
    <property type="method" value="X-ray"/>
    <property type="resolution" value="2.60 A"/>
    <property type="chains" value="A/B=828-1176"/>
</dbReference>
<dbReference type="PDB" id="1M8Z">
    <property type="method" value="X-ray"/>
    <property type="resolution" value="1.90 A"/>
    <property type="chains" value="A=828-1176"/>
</dbReference>
<dbReference type="PDB" id="2YJY">
    <property type="method" value="X-ray"/>
    <property type="resolution" value="2.60 A"/>
    <property type="chains" value="A/B=828-1176"/>
</dbReference>
<dbReference type="PDB" id="3BSB">
    <property type="method" value="X-ray"/>
    <property type="resolution" value="2.80 A"/>
    <property type="chains" value="A/B=828-1170"/>
</dbReference>
<dbReference type="PDB" id="3BSX">
    <property type="method" value="X-ray"/>
    <property type="resolution" value="2.32 A"/>
    <property type="chains" value="A/B=828-1170"/>
</dbReference>
<dbReference type="PDB" id="3Q0L">
    <property type="method" value="X-ray"/>
    <property type="resolution" value="2.50 A"/>
    <property type="chains" value="A/B=828-1176"/>
</dbReference>
<dbReference type="PDB" id="3Q0M">
    <property type="method" value="X-ray"/>
    <property type="resolution" value="2.70 A"/>
    <property type="chains" value="A/B=828-1176"/>
</dbReference>
<dbReference type="PDB" id="3Q0N">
    <property type="method" value="X-ray"/>
    <property type="resolution" value="2.40 A"/>
    <property type="chains" value="A/B=828-1176"/>
</dbReference>
<dbReference type="PDB" id="3Q0O">
    <property type="method" value="X-ray"/>
    <property type="resolution" value="2.80 A"/>
    <property type="chains" value="A/B=828-1176"/>
</dbReference>
<dbReference type="PDB" id="3Q0P">
    <property type="method" value="X-ray"/>
    <property type="resolution" value="2.60 A"/>
    <property type="chains" value="A/B=828-1176"/>
</dbReference>
<dbReference type="PDB" id="5YKH">
    <property type="method" value="X-ray"/>
    <property type="resolution" value="2.46 A"/>
    <property type="chains" value="A=898-1176"/>
</dbReference>
<dbReference type="PDB" id="5YKI">
    <property type="method" value="X-ray"/>
    <property type="resolution" value="2.25 A"/>
    <property type="chains" value="A=898-1176"/>
</dbReference>
<dbReference type="PDBsum" id="1IB2"/>
<dbReference type="PDBsum" id="1M8W"/>
<dbReference type="PDBsum" id="1M8X"/>
<dbReference type="PDBsum" id="1M8Y"/>
<dbReference type="PDBsum" id="1M8Z"/>
<dbReference type="PDBsum" id="2YJY"/>
<dbReference type="PDBsum" id="3BSB"/>
<dbReference type="PDBsum" id="3BSX"/>
<dbReference type="PDBsum" id="3Q0L"/>
<dbReference type="PDBsum" id="3Q0M"/>
<dbReference type="PDBsum" id="3Q0N"/>
<dbReference type="PDBsum" id="3Q0O"/>
<dbReference type="PDBsum" id="3Q0P"/>
<dbReference type="PDBsum" id="5YKH"/>
<dbReference type="PDBsum" id="5YKI"/>
<dbReference type="SMR" id="Q14671"/>
<dbReference type="BioGRID" id="115050">
    <property type="interactions" value="304"/>
</dbReference>
<dbReference type="DIP" id="DIP-29082N"/>
<dbReference type="FunCoup" id="Q14671">
    <property type="interactions" value="4717"/>
</dbReference>
<dbReference type="IntAct" id="Q14671">
    <property type="interactions" value="103"/>
</dbReference>
<dbReference type="MINT" id="Q14671"/>
<dbReference type="STRING" id="9606.ENSP00000391723"/>
<dbReference type="GlyCosmos" id="Q14671">
    <property type="glycosylation" value="15 sites, 2 glycans"/>
</dbReference>
<dbReference type="GlyGen" id="Q14671">
    <property type="glycosylation" value="24 sites, 2 N-linked glycans (1 site), 2 O-linked glycans (22 sites)"/>
</dbReference>
<dbReference type="iPTMnet" id="Q14671"/>
<dbReference type="MetOSite" id="Q14671"/>
<dbReference type="PhosphoSitePlus" id="Q14671"/>
<dbReference type="SwissPalm" id="Q14671"/>
<dbReference type="BioMuta" id="PUM1"/>
<dbReference type="DMDM" id="41688619"/>
<dbReference type="jPOST" id="Q14671"/>
<dbReference type="MassIVE" id="Q14671"/>
<dbReference type="PaxDb" id="9606-ENSP00000391723"/>
<dbReference type="PeptideAtlas" id="Q14671"/>
<dbReference type="ProteomicsDB" id="19456"/>
<dbReference type="ProteomicsDB" id="4116"/>
<dbReference type="ProteomicsDB" id="60101">
    <molecule id="Q14671-1"/>
</dbReference>
<dbReference type="ProteomicsDB" id="60102">
    <molecule id="Q14671-2"/>
</dbReference>
<dbReference type="Pumba" id="Q14671"/>
<dbReference type="Antibodypedia" id="16718">
    <property type="antibodies" value="282 antibodies from 33 providers"/>
</dbReference>
<dbReference type="DNASU" id="9698"/>
<dbReference type="Ensembl" id="ENST00000257075.9">
    <molecule id="Q14671-1"/>
    <property type="protein sequence ID" value="ENSP00000257075.5"/>
    <property type="gene ID" value="ENSG00000134644.16"/>
</dbReference>
<dbReference type="Ensembl" id="ENST00000373742.6">
    <molecule id="Q14671-4"/>
    <property type="protein sequence ID" value="ENSP00000362847.2"/>
    <property type="gene ID" value="ENSG00000134644.16"/>
</dbReference>
<dbReference type="Ensembl" id="ENST00000426105.7">
    <molecule id="Q14671-3"/>
    <property type="protein sequence ID" value="ENSP00000391723.2"/>
    <property type="gene ID" value="ENSG00000134644.16"/>
</dbReference>
<dbReference type="Ensembl" id="ENST00000440538.6">
    <molecule id="Q14671-2"/>
    <property type="protein sequence ID" value="ENSP00000401777.2"/>
    <property type="gene ID" value="ENSG00000134644.16"/>
</dbReference>
<dbReference type="GeneID" id="9698"/>
<dbReference type="KEGG" id="hsa:9698"/>
<dbReference type="MANE-Select" id="ENST00000426105.7">
    <molecule id="Q14671-3"/>
    <property type="protein sequence ID" value="ENSP00000391723.2"/>
    <property type="RefSeq nucleotide sequence ID" value="NM_001020658.2"/>
    <property type="RefSeq protein sequence ID" value="NP_001018494.1"/>
</dbReference>
<dbReference type="UCSC" id="uc001bsh.2">
    <molecule id="Q14671-1"/>
    <property type="organism name" value="human"/>
</dbReference>
<dbReference type="AGR" id="HGNC:14957"/>
<dbReference type="CTD" id="9698"/>
<dbReference type="DisGeNET" id="9698"/>
<dbReference type="GeneCards" id="PUM1"/>
<dbReference type="HGNC" id="HGNC:14957">
    <property type="gene designation" value="PUM1"/>
</dbReference>
<dbReference type="HPA" id="ENSG00000134644">
    <property type="expression patterns" value="Low tissue specificity"/>
</dbReference>
<dbReference type="MalaCards" id="PUM1"/>
<dbReference type="MIM" id="607204">
    <property type="type" value="gene"/>
</dbReference>
<dbReference type="MIM" id="617931">
    <property type="type" value="phenotype"/>
</dbReference>
<dbReference type="MIM" id="620719">
    <property type="type" value="phenotype"/>
</dbReference>
<dbReference type="neXtProt" id="NX_Q14671"/>
<dbReference type="OpenTargets" id="ENSG00000134644"/>
<dbReference type="Orphanet" id="589515">
    <property type="disease" value="PUM1-associated developmental disability-ataxia-seizure syndrome"/>
</dbReference>
<dbReference type="Orphanet" id="642747">
    <property type="disease" value="PUM1-related cerebellar ataxia"/>
</dbReference>
<dbReference type="PharmGKB" id="PA34042"/>
<dbReference type="VEuPathDB" id="HostDB:ENSG00000134644"/>
<dbReference type="eggNOG" id="KOG1488">
    <property type="taxonomic scope" value="Eukaryota"/>
</dbReference>
<dbReference type="GeneTree" id="ENSGT00940000158079"/>
<dbReference type="InParanoid" id="Q14671"/>
<dbReference type="OrthoDB" id="668540at2759"/>
<dbReference type="PAN-GO" id="Q14671">
    <property type="GO annotations" value="5 GO annotations based on evolutionary models"/>
</dbReference>
<dbReference type="PhylomeDB" id="Q14671"/>
<dbReference type="TreeFam" id="TF318160"/>
<dbReference type="PathwayCommons" id="Q14671"/>
<dbReference type="Reactome" id="R-HSA-432722">
    <property type="pathway name" value="Golgi Associated Vesicle Biogenesis"/>
</dbReference>
<dbReference type="SignaLink" id="Q14671"/>
<dbReference type="SIGNOR" id="Q14671"/>
<dbReference type="BioGRID-ORCS" id="9698">
    <property type="hits" value="103 hits in 1151 CRISPR screens"/>
</dbReference>
<dbReference type="CD-CODE" id="232F8A39">
    <property type="entry name" value="P-body"/>
</dbReference>
<dbReference type="CD-CODE" id="28619EF7">
    <property type="entry name" value="NP bodies"/>
</dbReference>
<dbReference type="CD-CODE" id="D212AE19">
    <property type="entry name" value="Synthetic Condensate 000305"/>
</dbReference>
<dbReference type="CD-CODE" id="DEE660B4">
    <property type="entry name" value="Stress granule"/>
</dbReference>
<dbReference type="ChiTaRS" id="PUM1">
    <property type="organism name" value="human"/>
</dbReference>
<dbReference type="EvolutionaryTrace" id="Q14671"/>
<dbReference type="GeneWiki" id="PUM1"/>
<dbReference type="GenomeRNAi" id="9698"/>
<dbReference type="Pharos" id="Q14671">
    <property type="development level" value="Tbio"/>
</dbReference>
<dbReference type="PRO" id="PR:Q14671"/>
<dbReference type="Proteomes" id="UP000005640">
    <property type="component" value="Chromosome 1"/>
</dbReference>
<dbReference type="RNAct" id="Q14671">
    <property type="molecule type" value="protein"/>
</dbReference>
<dbReference type="Bgee" id="ENSG00000134644">
    <property type="expression patterns" value="Expressed in dorsal motor nucleus of vagus nerve and 210 other cell types or tissues"/>
</dbReference>
<dbReference type="ExpressionAtlas" id="Q14671">
    <property type="expression patterns" value="baseline and differential"/>
</dbReference>
<dbReference type="GO" id="GO:0030424">
    <property type="term" value="C:axon"/>
    <property type="evidence" value="ECO:0007669"/>
    <property type="project" value="Ensembl"/>
</dbReference>
<dbReference type="GO" id="GO:0005737">
    <property type="term" value="C:cytoplasm"/>
    <property type="evidence" value="ECO:0000318"/>
    <property type="project" value="GO_Central"/>
</dbReference>
<dbReference type="GO" id="GO:0010494">
    <property type="term" value="C:cytoplasmic stress granule"/>
    <property type="evidence" value="ECO:0000314"/>
    <property type="project" value="UniProtKB"/>
</dbReference>
<dbReference type="GO" id="GO:0005829">
    <property type="term" value="C:cytosol"/>
    <property type="evidence" value="ECO:0000314"/>
    <property type="project" value="HPA"/>
</dbReference>
<dbReference type="GO" id="GO:0005654">
    <property type="term" value="C:nucleoplasm"/>
    <property type="evidence" value="ECO:0000314"/>
    <property type="project" value="HPA"/>
</dbReference>
<dbReference type="GO" id="GO:0000932">
    <property type="term" value="C:P-body"/>
    <property type="evidence" value="ECO:0000314"/>
    <property type="project" value="UniProtKB"/>
</dbReference>
<dbReference type="GO" id="GO:0035198">
    <property type="term" value="F:miRNA binding"/>
    <property type="evidence" value="ECO:0000314"/>
    <property type="project" value="UniProtKB"/>
</dbReference>
<dbReference type="GO" id="GO:0003730">
    <property type="term" value="F:mRNA 3'-UTR binding"/>
    <property type="evidence" value="ECO:0000314"/>
    <property type="project" value="UniProtKB"/>
</dbReference>
<dbReference type="GO" id="GO:0003723">
    <property type="term" value="F:RNA binding"/>
    <property type="evidence" value="ECO:0000314"/>
    <property type="project" value="UniProtKB"/>
</dbReference>
<dbReference type="GO" id="GO:0061158">
    <property type="term" value="P:3'-UTR-mediated mRNA destabilization"/>
    <property type="evidence" value="ECO:0000304"/>
    <property type="project" value="ARUK-UCL"/>
</dbReference>
<dbReference type="GO" id="GO:0008344">
    <property type="term" value="P:adult locomotory behavior"/>
    <property type="evidence" value="ECO:0000250"/>
    <property type="project" value="UniProtKB"/>
</dbReference>
<dbReference type="GO" id="GO:0035196">
    <property type="term" value="P:miRNA processing"/>
    <property type="evidence" value="ECO:0000315"/>
    <property type="project" value="UniProtKB"/>
</dbReference>
<dbReference type="GO" id="GO:0061157">
    <property type="term" value="P:mRNA destabilization"/>
    <property type="evidence" value="ECO:0000250"/>
    <property type="project" value="UniProtKB"/>
</dbReference>
<dbReference type="GO" id="GO:2000637">
    <property type="term" value="P:positive regulation of miRNA-mediated gene silencing"/>
    <property type="evidence" value="ECO:0000314"/>
    <property type="project" value="UniProtKB"/>
</dbReference>
<dbReference type="GO" id="GO:1900246">
    <property type="term" value="P:positive regulation of RIG-I signaling pathway"/>
    <property type="evidence" value="ECO:0000314"/>
    <property type="project" value="UniProtKB"/>
</dbReference>
<dbReference type="GO" id="GO:0016441">
    <property type="term" value="P:post-transcriptional gene silencing"/>
    <property type="evidence" value="ECO:0000250"/>
    <property type="project" value="UniProtKB"/>
</dbReference>
<dbReference type="GO" id="GO:0010608">
    <property type="term" value="P:post-transcriptional regulation of gene expression"/>
    <property type="evidence" value="ECO:0000314"/>
    <property type="project" value="MGI"/>
</dbReference>
<dbReference type="GO" id="GO:0051726">
    <property type="term" value="P:regulation of cell cycle"/>
    <property type="evidence" value="ECO:0000314"/>
    <property type="project" value="UniProtKB"/>
</dbReference>
<dbReference type="GO" id="GO:0051983">
    <property type="term" value="P:regulation of chromosome segregation"/>
    <property type="evidence" value="ECO:0000314"/>
    <property type="project" value="UniProtKB"/>
</dbReference>
<dbReference type="GO" id="GO:0060964">
    <property type="term" value="P:regulation of miRNA-mediated gene silencing"/>
    <property type="evidence" value="ECO:0000304"/>
    <property type="project" value="UniProtKB"/>
</dbReference>
<dbReference type="GO" id="GO:0043488">
    <property type="term" value="P:regulation of mRNA stability"/>
    <property type="evidence" value="ECO:0000314"/>
    <property type="project" value="UniProtKB"/>
</dbReference>
<dbReference type="GO" id="GO:0006417">
    <property type="term" value="P:regulation of translation"/>
    <property type="evidence" value="ECO:0007669"/>
    <property type="project" value="UniProtKB-KW"/>
</dbReference>
<dbReference type="GO" id="GO:0007283">
    <property type="term" value="P:spermatogenesis"/>
    <property type="evidence" value="ECO:0000250"/>
    <property type="project" value="UniProtKB"/>
</dbReference>
<dbReference type="GO" id="GO:0048863">
    <property type="term" value="P:stem cell differentiation"/>
    <property type="evidence" value="ECO:0000250"/>
    <property type="project" value="UniProtKB"/>
</dbReference>
<dbReference type="CDD" id="cd07920">
    <property type="entry name" value="Pumilio"/>
    <property type="match status" value="1"/>
</dbReference>
<dbReference type="FunFam" id="1.25.10.10:FF:000004">
    <property type="entry name" value="Pumilio homolog 1 isoform 2"/>
    <property type="match status" value="1"/>
</dbReference>
<dbReference type="Gene3D" id="1.25.10.10">
    <property type="entry name" value="Leucine-rich Repeat Variant"/>
    <property type="match status" value="1"/>
</dbReference>
<dbReference type="InterPro" id="IPR011989">
    <property type="entry name" value="ARM-like"/>
</dbReference>
<dbReference type="InterPro" id="IPR016024">
    <property type="entry name" value="ARM-type_fold"/>
</dbReference>
<dbReference type="InterPro" id="IPR033133">
    <property type="entry name" value="PUM-HD"/>
</dbReference>
<dbReference type="InterPro" id="IPR033712">
    <property type="entry name" value="Pumilio_RNA-bd"/>
</dbReference>
<dbReference type="InterPro" id="IPR001313">
    <property type="entry name" value="Pumilio_RNA-bd_rpt"/>
</dbReference>
<dbReference type="PANTHER" id="PTHR12537:SF1">
    <property type="entry name" value="PUMILIO HOMOLOG 1"/>
    <property type="match status" value="1"/>
</dbReference>
<dbReference type="PANTHER" id="PTHR12537">
    <property type="entry name" value="RNA BINDING PROTEIN PUMILIO-RELATED"/>
    <property type="match status" value="1"/>
</dbReference>
<dbReference type="Pfam" id="PF00806">
    <property type="entry name" value="PUF"/>
    <property type="match status" value="8"/>
</dbReference>
<dbReference type="SMART" id="SM00025">
    <property type="entry name" value="Pumilio"/>
    <property type="match status" value="8"/>
</dbReference>
<dbReference type="SUPFAM" id="SSF48371">
    <property type="entry name" value="ARM repeat"/>
    <property type="match status" value="1"/>
</dbReference>
<dbReference type="PROSITE" id="PS50302">
    <property type="entry name" value="PUM"/>
    <property type="match status" value="8"/>
</dbReference>
<dbReference type="PROSITE" id="PS50303">
    <property type="entry name" value="PUM_HD"/>
    <property type="match status" value="1"/>
</dbReference>
<sequence>MSVACVLKRKAVLWQDSFSPHLKHHPQEPANPNMPVVLTSGTGSQAQPQPAANQALAAGTHSSPVPGSIGVAGRSQDDAMVDYFFQRQHGEQLGGGGSGGGGYNNSKHRWPTGDNIHAEHQVRSMDELNHDFQALALEGRAMGEQLLPGKKFWETDESSKDGPKGIFLGDQWRDSAWGTSDHSVSQPIMVQRRPGQSFHVNSEVNSVLSPRSESGGLGVSMVEYVLSSSPGDSCLRKGGFGPRDADSDENDKGEKKNKGTFDGDKLGDLKEEGDVMDKTNGLPVQNGIDADVKDFSRTPGNCQNSANEVDLLGPNQNGSEGLAQLTSTNGAKPVEDFSNMESQSVPLDPMEHVGMEPLQFDYSGTQVPVDSAAATVGLFDYNSQQQLFQRPNALAVQQLTAAQQQQYALAAAHQPHIGLAPAAFVPNPYIISAAPPGTDPYTAGLAAAATLGPAVVPHQYYGVTPWGVYPASLFQQQAAAAAAATNSANQQTTPQAQQGQQQVLRGGASQRPLTPNQNQQGQQTDPLVAAAAVNSALAFGQGLAAGMPGYPVLAPAAYYDQTGALVVNAGARNGLGAPVRLVAPAPVIISSSAAQAAVAAAAASANGAAGGLAGTTNGPFRPLGTQQPQPQPQQQPNNNLASSSFYGNNSLNSNSQSSSLFSQGSAQPANTSLGFGSSSSLGATLGSALGGFGTAVANSNTGSGSRRDSLTGSSDLYKRTSSSLTPIGHSFYNGLSFSSSPGPVGMPLPSQGPGHSQTPPPSLSSHGSSSSLNLGGLTNGSGRYISAAPGAEAKYRSASSASSLFSPSSTLFSSSRLRYGMSDVMPSGRSRLLEDFRNNRYPNLQLREIAGHIMEFSQDQHGSRFIQLKLERATPAERQLVFNEILQAAYQLMVDVFGNYVIQKFFEFGSLEQKLALAERIRGHVLSLALQMYGCRVIQKALEFIPSDQQNEMVRELDGHVLKCVKDQNGNHVVQKCIECVQPQSLQFIIDAFKGQVFALSTHPYGCRVIQRILEHCLPDQTLPILEELHQHTEQLVQDQYGNYVIQHVLEHGRPEDKSKIVAEIRGNVLVLSQHKFASNVVEKCVTHASRTERAVLIDEVCTMNDGPHSALYTMMKDQYANYVVQKMIDVAEPGQRKIVMHKIRPHIATLRKYTYGKHILAKLEKYYMKNGVDLGPICGPPNGII</sequence>
<reference key="1">
    <citation type="journal article" date="2002" name="Gene">
        <title>Cloning and comparative sequence analysis of PUM1 and PUM2 genes, human members of the Pumilio family of RNA-binding proteins.</title>
        <authorList>
            <person name="Spassov D.S."/>
            <person name="Jurecic R."/>
        </authorList>
    </citation>
    <scope>NUCLEOTIDE SEQUENCE [MRNA] (ISOFORM 1)</scope>
    <scope>TISSUE SPECIFICITY</scope>
</reference>
<reference key="2">
    <citation type="journal article" date="1995" name="DNA Res.">
        <title>Prediction of the coding sequences of unidentified human genes. III. The coding sequences of 40 new genes (KIAA0081-KIAA0120) deduced by analysis of cDNA clones from human cell line KG-1.</title>
        <authorList>
            <person name="Nagase T."/>
            <person name="Miyajima N."/>
            <person name="Tanaka A."/>
            <person name="Sazuka T."/>
            <person name="Seki N."/>
            <person name="Sato S."/>
            <person name="Tabata S."/>
            <person name="Ishikawa K."/>
            <person name="Kawarabayasi Y."/>
            <person name="Kotani H."/>
            <person name="Nomura N."/>
        </authorList>
    </citation>
    <scope>NUCLEOTIDE SEQUENCE [LARGE SCALE MRNA] (ISOFORM 2)</scope>
    <source>
        <tissue>Bone marrow</tissue>
    </source>
</reference>
<reference key="3">
    <citation type="submission" date="2005-01" db="EMBL/GenBank/DDBJ databases">
        <authorList>
            <person name="Ohara O."/>
            <person name="Nagase T."/>
            <person name="Kikuno R."/>
            <person name="Nomura N."/>
        </authorList>
    </citation>
    <scope>SEQUENCE REVISION</scope>
</reference>
<reference key="4">
    <citation type="submission" date="2005-04" db="EMBL/GenBank/DDBJ databases">
        <authorList>
            <person name="Suzuki Y."/>
            <person name="Sugano S."/>
            <person name="Totoki Y."/>
            <person name="Toyoda A."/>
            <person name="Takeda T."/>
            <person name="Sakaki Y."/>
            <person name="Tanaka A."/>
            <person name="Yokoyama S."/>
        </authorList>
    </citation>
    <scope>NUCLEOTIDE SEQUENCE [LARGE SCALE MRNA] (ISOFORM 3)</scope>
    <source>
        <tissue>Coronary artery</tissue>
    </source>
</reference>
<reference key="5">
    <citation type="journal article" date="2004" name="Nat. Genet.">
        <title>Complete sequencing and characterization of 21,243 full-length human cDNAs.</title>
        <authorList>
            <person name="Ota T."/>
            <person name="Suzuki Y."/>
            <person name="Nishikawa T."/>
            <person name="Otsuki T."/>
            <person name="Sugiyama T."/>
            <person name="Irie R."/>
            <person name="Wakamatsu A."/>
            <person name="Hayashi K."/>
            <person name="Sato H."/>
            <person name="Nagai K."/>
            <person name="Kimura K."/>
            <person name="Makita H."/>
            <person name="Sekine M."/>
            <person name="Obayashi M."/>
            <person name="Nishi T."/>
            <person name="Shibahara T."/>
            <person name="Tanaka T."/>
            <person name="Ishii S."/>
            <person name="Yamamoto J."/>
            <person name="Saito K."/>
            <person name="Kawai Y."/>
            <person name="Isono Y."/>
            <person name="Nakamura Y."/>
            <person name="Nagahari K."/>
            <person name="Murakami K."/>
            <person name="Yasuda T."/>
            <person name="Iwayanagi T."/>
            <person name="Wagatsuma M."/>
            <person name="Shiratori A."/>
            <person name="Sudo H."/>
            <person name="Hosoiri T."/>
            <person name="Kaku Y."/>
            <person name="Kodaira H."/>
            <person name="Kondo H."/>
            <person name="Sugawara M."/>
            <person name="Takahashi M."/>
            <person name="Kanda K."/>
            <person name="Yokoi T."/>
            <person name="Furuya T."/>
            <person name="Kikkawa E."/>
            <person name="Omura Y."/>
            <person name="Abe K."/>
            <person name="Kamihara K."/>
            <person name="Katsuta N."/>
            <person name="Sato K."/>
            <person name="Tanikawa M."/>
            <person name="Yamazaki M."/>
            <person name="Ninomiya K."/>
            <person name="Ishibashi T."/>
            <person name="Yamashita H."/>
            <person name="Murakawa K."/>
            <person name="Fujimori K."/>
            <person name="Tanai H."/>
            <person name="Kimata M."/>
            <person name="Watanabe M."/>
            <person name="Hiraoka S."/>
            <person name="Chiba Y."/>
            <person name="Ishida S."/>
            <person name="Ono Y."/>
            <person name="Takiguchi S."/>
            <person name="Watanabe S."/>
            <person name="Yosida M."/>
            <person name="Hotuta T."/>
            <person name="Kusano J."/>
            <person name="Kanehori K."/>
            <person name="Takahashi-Fujii A."/>
            <person name="Hara H."/>
            <person name="Tanase T.-O."/>
            <person name="Nomura Y."/>
            <person name="Togiya S."/>
            <person name="Komai F."/>
            <person name="Hara R."/>
            <person name="Takeuchi K."/>
            <person name="Arita M."/>
            <person name="Imose N."/>
            <person name="Musashino K."/>
            <person name="Yuuki H."/>
            <person name="Oshima A."/>
            <person name="Sasaki N."/>
            <person name="Aotsuka S."/>
            <person name="Yoshikawa Y."/>
            <person name="Matsunawa H."/>
            <person name="Ichihara T."/>
            <person name="Shiohata N."/>
            <person name="Sano S."/>
            <person name="Moriya S."/>
            <person name="Momiyama H."/>
            <person name="Satoh N."/>
            <person name="Takami S."/>
            <person name="Terashima Y."/>
            <person name="Suzuki O."/>
            <person name="Nakagawa S."/>
            <person name="Senoh A."/>
            <person name="Mizoguchi H."/>
            <person name="Goto Y."/>
            <person name="Shimizu F."/>
            <person name="Wakebe H."/>
            <person name="Hishigaki H."/>
            <person name="Watanabe T."/>
            <person name="Sugiyama A."/>
            <person name="Takemoto M."/>
            <person name="Kawakami B."/>
            <person name="Yamazaki M."/>
            <person name="Watanabe K."/>
            <person name="Kumagai A."/>
            <person name="Itakura S."/>
            <person name="Fukuzumi Y."/>
            <person name="Fujimori Y."/>
            <person name="Komiyama M."/>
            <person name="Tashiro H."/>
            <person name="Tanigami A."/>
            <person name="Fujiwara T."/>
            <person name="Ono T."/>
            <person name="Yamada K."/>
            <person name="Fujii Y."/>
            <person name="Ozaki K."/>
            <person name="Hirao M."/>
            <person name="Ohmori Y."/>
            <person name="Kawabata A."/>
            <person name="Hikiji T."/>
            <person name="Kobatake N."/>
            <person name="Inagaki H."/>
            <person name="Ikema Y."/>
            <person name="Okamoto S."/>
            <person name="Okitani R."/>
            <person name="Kawakami T."/>
            <person name="Noguchi S."/>
            <person name="Itoh T."/>
            <person name="Shigeta K."/>
            <person name="Senba T."/>
            <person name="Matsumura K."/>
            <person name="Nakajima Y."/>
            <person name="Mizuno T."/>
            <person name="Morinaga M."/>
            <person name="Sasaki M."/>
            <person name="Togashi T."/>
            <person name="Oyama M."/>
            <person name="Hata H."/>
            <person name="Watanabe M."/>
            <person name="Komatsu T."/>
            <person name="Mizushima-Sugano J."/>
            <person name="Satoh T."/>
            <person name="Shirai Y."/>
            <person name="Takahashi Y."/>
            <person name="Nakagawa K."/>
            <person name="Okumura K."/>
            <person name="Nagase T."/>
            <person name="Nomura N."/>
            <person name="Kikuchi H."/>
            <person name="Masuho Y."/>
            <person name="Yamashita R."/>
            <person name="Nakai K."/>
            <person name="Yada T."/>
            <person name="Nakamura Y."/>
            <person name="Ohara O."/>
            <person name="Isogai T."/>
            <person name="Sugano S."/>
        </authorList>
    </citation>
    <scope>NUCLEOTIDE SEQUENCE [LARGE SCALE MRNA] (ISOFORMS 1 AND 4)</scope>
    <source>
        <tissue>Amygdala</tissue>
        <tissue>Placenta</tissue>
    </source>
</reference>
<reference key="6">
    <citation type="journal article" date="2006" name="Nature">
        <title>The DNA sequence and biological annotation of human chromosome 1.</title>
        <authorList>
            <person name="Gregory S.G."/>
            <person name="Barlow K.F."/>
            <person name="McLay K.E."/>
            <person name="Kaul R."/>
            <person name="Swarbreck D."/>
            <person name="Dunham A."/>
            <person name="Scott C.E."/>
            <person name="Howe K.L."/>
            <person name="Woodfine K."/>
            <person name="Spencer C.C.A."/>
            <person name="Jones M.C."/>
            <person name="Gillson C."/>
            <person name="Searle S."/>
            <person name="Zhou Y."/>
            <person name="Kokocinski F."/>
            <person name="McDonald L."/>
            <person name="Evans R."/>
            <person name="Phillips K."/>
            <person name="Atkinson A."/>
            <person name="Cooper R."/>
            <person name="Jones C."/>
            <person name="Hall R.E."/>
            <person name="Andrews T.D."/>
            <person name="Lloyd C."/>
            <person name="Ainscough R."/>
            <person name="Almeida J.P."/>
            <person name="Ambrose K.D."/>
            <person name="Anderson F."/>
            <person name="Andrew R.W."/>
            <person name="Ashwell R.I.S."/>
            <person name="Aubin K."/>
            <person name="Babbage A.K."/>
            <person name="Bagguley C.L."/>
            <person name="Bailey J."/>
            <person name="Beasley H."/>
            <person name="Bethel G."/>
            <person name="Bird C.P."/>
            <person name="Bray-Allen S."/>
            <person name="Brown J.Y."/>
            <person name="Brown A.J."/>
            <person name="Buckley D."/>
            <person name="Burton J."/>
            <person name="Bye J."/>
            <person name="Carder C."/>
            <person name="Chapman J.C."/>
            <person name="Clark S.Y."/>
            <person name="Clarke G."/>
            <person name="Clee C."/>
            <person name="Cobley V."/>
            <person name="Collier R.E."/>
            <person name="Corby N."/>
            <person name="Coville G.J."/>
            <person name="Davies J."/>
            <person name="Deadman R."/>
            <person name="Dunn M."/>
            <person name="Earthrowl M."/>
            <person name="Ellington A.G."/>
            <person name="Errington H."/>
            <person name="Frankish A."/>
            <person name="Frankland J."/>
            <person name="French L."/>
            <person name="Garner P."/>
            <person name="Garnett J."/>
            <person name="Gay L."/>
            <person name="Ghori M.R.J."/>
            <person name="Gibson R."/>
            <person name="Gilby L.M."/>
            <person name="Gillett W."/>
            <person name="Glithero R.J."/>
            <person name="Grafham D.V."/>
            <person name="Griffiths C."/>
            <person name="Griffiths-Jones S."/>
            <person name="Grocock R."/>
            <person name="Hammond S."/>
            <person name="Harrison E.S.I."/>
            <person name="Hart E."/>
            <person name="Haugen E."/>
            <person name="Heath P.D."/>
            <person name="Holmes S."/>
            <person name="Holt K."/>
            <person name="Howden P.J."/>
            <person name="Hunt A.R."/>
            <person name="Hunt S.E."/>
            <person name="Hunter G."/>
            <person name="Isherwood J."/>
            <person name="James R."/>
            <person name="Johnson C."/>
            <person name="Johnson D."/>
            <person name="Joy A."/>
            <person name="Kay M."/>
            <person name="Kershaw J.K."/>
            <person name="Kibukawa M."/>
            <person name="Kimberley A.M."/>
            <person name="King A."/>
            <person name="Knights A.J."/>
            <person name="Lad H."/>
            <person name="Laird G."/>
            <person name="Lawlor S."/>
            <person name="Leongamornlert D.A."/>
            <person name="Lloyd D.M."/>
            <person name="Loveland J."/>
            <person name="Lovell J."/>
            <person name="Lush M.J."/>
            <person name="Lyne R."/>
            <person name="Martin S."/>
            <person name="Mashreghi-Mohammadi M."/>
            <person name="Matthews L."/>
            <person name="Matthews N.S.W."/>
            <person name="McLaren S."/>
            <person name="Milne S."/>
            <person name="Mistry S."/>
            <person name="Moore M.J.F."/>
            <person name="Nickerson T."/>
            <person name="O'Dell C.N."/>
            <person name="Oliver K."/>
            <person name="Palmeiri A."/>
            <person name="Palmer S.A."/>
            <person name="Parker A."/>
            <person name="Patel D."/>
            <person name="Pearce A.V."/>
            <person name="Peck A.I."/>
            <person name="Pelan S."/>
            <person name="Phelps K."/>
            <person name="Phillimore B.J."/>
            <person name="Plumb R."/>
            <person name="Rajan J."/>
            <person name="Raymond C."/>
            <person name="Rouse G."/>
            <person name="Saenphimmachak C."/>
            <person name="Sehra H.K."/>
            <person name="Sheridan E."/>
            <person name="Shownkeen R."/>
            <person name="Sims S."/>
            <person name="Skuce C.D."/>
            <person name="Smith M."/>
            <person name="Steward C."/>
            <person name="Subramanian S."/>
            <person name="Sycamore N."/>
            <person name="Tracey A."/>
            <person name="Tromans A."/>
            <person name="Van Helmond Z."/>
            <person name="Wall M."/>
            <person name="Wallis J.M."/>
            <person name="White S."/>
            <person name="Whitehead S.L."/>
            <person name="Wilkinson J.E."/>
            <person name="Willey D.L."/>
            <person name="Williams H."/>
            <person name="Wilming L."/>
            <person name="Wray P.W."/>
            <person name="Wu Z."/>
            <person name="Coulson A."/>
            <person name="Vaudin M."/>
            <person name="Sulston J.E."/>
            <person name="Durbin R.M."/>
            <person name="Hubbard T."/>
            <person name="Wooster R."/>
            <person name="Dunham I."/>
            <person name="Carter N.P."/>
            <person name="McVean G."/>
            <person name="Ross M.T."/>
            <person name="Harrow J."/>
            <person name="Olson M.V."/>
            <person name="Beck S."/>
            <person name="Rogers J."/>
            <person name="Bentley D.R."/>
        </authorList>
    </citation>
    <scope>NUCLEOTIDE SEQUENCE [LARGE SCALE GENOMIC DNA]</scope>
</reference>
<reference key="7">
    <citation type="submission" date="2005-09" db="EMBL/GenBank/DDBJ databases">
        <authorList>
            <person name="Mural R.J."/>
            <person name="Istrail S."/>
            <person name="Sutton G.G."/>
            <person name="Florea L."/>
            <person name="Halpern A.L."/>
            <person name="Mobarry C.M."/>
            <person name="Lippert R."/>
            <person name="Walenz B."/>
            <person name="Shatkay H."/>
            <person name="Dew I."/>
            <person name="Miller J.R."/>
            <person name="Flanigan M.J."/>
            <person name="Edwards N.J."/>
            <person name="Bolanos R."/>
            <person name="Fasulo D."/>
            <person name="Halldorsson B.V."/>
            <person name="Hannenhalli S."/>
            <person name="Turner R."/>
            <person name="Yooseph S."/>
            <person name="Lu F."/>
            <person name="Nusskern D.R."/>
            <person name="Shue B.C."/>
            <person name="Zheng X.H."/>
            <person name="Zhong F."/>
            <person name="Delcher A.L."/>
            <person name="Huson D.H."/>
            <person name="Kravitz S.A."/>
            <person name="Mouchard L."/>
            <person name="Reinert K."/>
            <person name="Remington K.A."/>
            <person name="Clark A.G."/>
            <person name="Waterman M.S."/>
            <person name="Eichler E.E."/>
            <person name="Adams M.D."/>
            <person name="Hunkapiller M.W."/>
            <person name="Myers E.W."/>
            <person name="Venter J.C."/>
        </authorList>
    </citation>
    <scope>NUCLEOTIDE SEQUENCE [LARGE SCALE GENOMIC DNA]</scope>
</reference>
<reference key="8">
    <citation type="journal article" date="2004" name="Genome Res.">
        <title>The status, quality, and expansion of the NIH full-length cDNA project: the Mammalian Gene Collection (MGC).</title>
        <authorList>
            <consortium name="The MGC Project Team"/>
        </authorList>
    </citation>
    <scope>NUCLEOTIDE SEQUENCE [LARGE SCALE MRNA] (ISOFORM 1)</scope>
    <source>
        <tissue>Muscle</tissue>
    </source>
</reference>
<reference key="9">
    <citation type="journal article" date="2003" name="Oncogene">
        <title>Genome-wide comparison of human keratinocyte and squamous cell carcinoma responses to UVB irradiation: implications for skin and epithelial cancer.</title>
        <authorList>
            <person name="Dazard J.-E."/>
            <person name="Gal H."/>
            <person name="Amariglio N."/>
            <person name="Rechavi G."/>
            <person name="Domany E."/>
            <person name="Givol D."/>
        </authorList>
    </citation>
    <scope>INDUCTION</scope>
</reference>
<reference key="10">
    <citation type="journal article" date="2006" name="Cell">
        <title>Global, in vivo, and site-specific phosphorylation dynamics in signaling networks.</title>
        <authorList>
            <person name="Olsen J.V."/>
            <person name="Blagoev B."/>
            <person name="Gnad F."/>
            <person name="Macek B."/>
            <person name="Kumar C."/>
            <person name="Mortensen P."/>
            <person name="Mann M."/>
        </authorList>
    </citation>
    <scope>PHOSPHORYLATION [LARGE SCALE ANALYSIS] AT SER-209</scope>
    <scope>IDENTIFICATION BY MASS SPECTROMETRY [LARGE SCALE ANALYSIS]</scope>
    <source>
        <tissue>Cervix carcinoma</tissue>
    </source>
</reference>
<reference key="11">
    <citation type="journal article" date="2008" name="Mol. Cell">
        <title>Kinase-selective enrichment enables quantitative phosphoproteomics of the kinome across the cell cycle.</title>
        <authorList>
            <person name="Daub H."/>
            <person name="Olsen J.V."/>
            <person name="Bairlein M."/>
            <person name="Gnad F."/>
            <person name="Oppermann F.S."/>
            <person name="Korner R."/>
            <person name="Greff Z."/>
            <person name="Keri G."/>
            <person name="Stemmann O."/>
            <person name="Mann M."/>
        </authorList>
    </citation>
    <scope>IDENTIFICATION BY MASS SPECTROMETRY [LARGE SCALE ANALYSIS]</scope>
    <source>
        <tissue>Cervix carcinoma</tissue>
    </source>
</reference>
<reference key="12">
    <citation type="journal article" date="2008" name="PLoS ONE">
        <title>Comparative analysis of mRNA targets for human PUF-family proteins suggests extensive interaction with the miRNA regulatory system.</title>
        <authorList>
            <person name="Galgano A."/>
            <person name="Forrer M."/>
            <person name="Jaskiewicz L."/>
            <person name="Kanitz A."/>
            <person name="Zavolan M."/>
            <person name="Gerber A.P."/>
        </authorList>
    </citation>
    <scope>FUNCTION</scope>
    <scope>RNA-BINDING</scope>
</reference>
<reference key="13">
    <citation type="journal article" date="2008" name="Proc. Natl. Acad. Sci. U.S.A.">
        <title>A quantitative atlas of mitotic phosphorylation.</title>
        <authorList>
            <person name="Dephoure N."/>
            <person name="Zhou C."/>
            <person name="Villen J."/>
            <person name="Beausoleil S.A."/>
            <person name="Bakalarski C.E."/>
            <person name="Elledge S.J."/>
            <person name="Gygi S.P."/>
        </authorList>
    </citation>
    <scope>PHOSPHORYLATION [LARGE SCALE ANALYSIS] AT SER-19; SER-75; SER-209 AND SER-709</scope>
    <scope>IDENTIFICATION BY MASS SPECTROMETRY [LARGE SCALE ANALYSIS]</scope>
    <source>
        <tissue>Cervix carcinoma</tissue>
    </source>
</reference>
<reference key="14">
    <citation type="journal article" date="2009" name="Sci. Signal.">
        <title>Quantitative phosphoproteomic analysis of T cell receptor signaling reveals system-wide modulation of protein-protein interactions.</title>
        <authorList>
            <person name="Mayya V."/>
            <person name="Lundgren D.H."/>
            <person name="Hwang S.-I."/>
            <person name="Rezaul K."/>
            <person name="Wu L."/>
            <person name="Eng J.K."/>
            <person name="Rodionov V."/>
            <person name="Han D.K."/>
        </authorList>
    </citation>
    <scope>PHOSPHORYLATION [LARGE SCALE ANALYSIS] AT SER-75; SER-209; SER-709 AND SER-806</scope>
    <scope>IDENTIFICATION BY MASS SPECTROMETRY [LARGE SCALE ANALYSIS]</scope>
    <source>
        <tissue>Leukemic T-cell</tissue>
    </source>
</reference>
<reference key="15">
    <citation type="journal article" date="2010" name="Nat. Cell Biol.">
        <title>A Pumilio-induced RNA structure switch in p27-3' UTR controls miR-221 and miR-222 accessibility.</title>
        <authorList>
            <person name="Kedde M."/>
            <person name="van Kouwenhove M."/>
            <person name="Zwart W."/>
            <person name="Oude Vrielink J.A."/>
            <person name="Elkon R."/>
            <person name="Agami R."/>
        </authorList>
    </citation>
    <scope>FUNCTION</scope>
    <scope>SUBCELLULAR LOCATION</scope>
    <scope>RNA-BINDING</scope>
    <scope>PHOSPHORYLATION AT SER-209 AND SER-714</scope>
    <scope>MUTAGENESIS OF SER-209 AND SER-714</scope>
</reference>
<reference key="16">
    <citation type="journal article" date="2010" name="Sci. Signal.">
        <title>Quantitative phosphoproteomics reveals widespread full phosphorylation site occupancy during mitosis.</title>
        <authorList>
            <person name="Olsen J.V."/>
            <person name="Vermeulen M."/>
            <person name="Santamaria A."/>
            <person name="Kumar C."/>
            <person name="Miller M.L."/>
            <person name="Jensen L.J."/>
            <person name="Gnad F."/>
            <person name="Cox J."/>
            <person name="Jensen T.S."/>
            <person name="Nigg E.A."/>
            <person name="Brunak S."/>
            <person name="Mann M."/>
        </authorList>
    </citation>
    <scope>PHOSPHORYLATION [LARGE SCALE ANALYSIS] AT SER-98; SER-106; SER-209 AND SER-709</scope>
    <scope>IDENTIFICATION BY MASS SPECTROMETRY [LARGE SCALE ANALYSIS]</scope>
    <source>
        <tissue>Cervix carcinoma</tissue>
    </source>
</reference>
<reference key="17">
    <citation type="journal article" date="2010" name="Silence">
        <title>A structural-based statistical approach suggests a cooperative activity of PUM1 and miR-410 in human 3'-untranslated regions.</title>
        <authorList>
            <person name="Leibovich L."/>
            <person name="Mandel-Gutfreund Y."/>
            <person name="Yakhini Z."/>
        </authorList>
    </citation>
    <scope>FUNCTION</scope>
</reference>
<reference key="18">
    <citation type="journal article" date="2011" name="BMC Syst. Biol.">
        <title>Initial characterization of the human central proteome.</title>
        <authorList>
            <person name="Burkard T.R."/>
            <person name="Planyavsky M."/>
            <person name="Kaupe I."/>
            <person name="Breitwieser F.P."/>
            <person name="Buerckstuemmer T."/>
            <person name="Bennett K.L."/>
            <person name="Superti-Furga G."/>
            <person name="Colinge J."/>
        </authorList>
    </citation>
    <scope>IDENTIFICATION BY MASS SPECTROMETRY [LARGE SCALE ANALYSIS]</scope>
</reference>
<reference key="19">
    <citation type="journal article" date="2011" name="Nat. Chem. Biol.">
        <title>A universal code for RNA recognition by PUF proteins.</title>
        <authorList>
            <person name="Filipovska A."/>
            <person name="Razif M.F."/>
            <person name="Nygaard K.K."/>
            <person name="Rackham O."/>
        </authorList>
    </citation>
    <scope>DOMAIN</scope>
    <scope>FUNCTION</scope>
    <scope>MUTAGENESIS OF 863-SER--GLN-867; 899-ASN--GLN-903; 935-CYS--GLN-939; 971-ASN--GLN-975; CYS-1007; 1007-CYS--GLN-1011; 1043-ASN--GLN-1047; 1079-SER--GLU-1083 AND 1122-ASN--GLN-1126</scope>
</reference>
<reference key="20">
    <citation type="journal article" date="2011" name="Sci. Signal.">
        <title>System-wide temporal characterization of the proteome and phosphoproteome of human embryonic stem cell differentiation.</title>
        <authorList>
            <person name="Rigbolt K.T."/>
            <person name="Prokhorova T.A."/>
            <person name="Akimov V."/>
            <person name="Henningsen J."/>
            <person name="Johansen P.T."/>
            <person name="Kratchmarova I."/>
            <person name="Kassem M."/>
            <person name="Mann M."/>
            <person name="Olsen J.V."/>
            <person name="Blagoev B."/>
        </authorList>
    </citation>
    <scope>PHOSPHORYLATION [LARGE SCALE ANALYSIS] AT SER-75 AND SER-709</scope>
    <scope>IDENTIFICATION BY MASS SPECTROMETRY [LARGE SCALE ANALYSIS]</scope>
</reference>
<reference key="21">
    <citation type="journal article" date="2012" name="Genes Dev.">
        <title>Pumilio facilitates miRNA regulation of the E2F3 oncogene.</title>
        <authorList>
            <person name="Miles W.O."/>
            <person name="Tschop K."/>
            <person name="Herr A."/>
            <person name="Ji J.Y."/>
            <person name="Dyson N.J."/>
        </authorList>
    </citation>
    <scope>FUNCTION</scope>
</reference>
<reference key="22">
    <citation type="journal article" date="2012" name="J. Biol. Chem.">
        <title>Human Pumilio proteins recruit multiple deadenylases to efficiently repress messenger RNAs.</title>
        <authorList>
            <person name="Van Etten J."/>
            <person name="Schagat T.L."/>
            <person name="Hrit J."/>
            <person name="Weidmann C.A."/>
            <person name="Brumbaugh J."/>
            <person name="Coon J.J."/>
            <person name="Goldstrohm A.C."/>
        </authorList>
    </citation>
    <scope>FUNCTION</scope>
    <scope>SUBUNIT</scope>
    <scope>INTERACTION WITH A DEADENYLASE COMPLEX</scope>
</reference>
<reference key="23">
    <citation type="journal article" date="2012" name="Proc. Natl. Acad. Sci. U.S.A.">
        <title>N-terminal acetylome analyses and functional insights of the N-terminal acetyltransferase NatB.</title>
        <authorList>
            <person name="Van Damme P."/>
            <person name="Lasa M."/>
            <person name="Polevoda B."/>
            <person name="Gazquez C."/>
            <person name="Elosegui-Artola A."/>
            <person name="Kim D.S."/>
            <person name="De Juan-Pardo E."/>
            <person name="Demeyer K."/>
            <person name="Hole K."/>
            <person name="Larrea E."/>
            <person name="Timmerman E."/>
            <person name="Prieto J."/>
            <person name="Arnesen T."/>
            <person name="Sherman F."/>
            <person name="Gevaert K."/>
            <person name="Aldabe R."/>
        </authorList>
    </citation>
    <scope>ACETYLATION [LARGE SCALE ANALYSIS] AT SER-2</scope>
    <scope>CLEAVAGE OF INITIATOR METHIONINE [LARGE SCALE ANALYSIS]</scope>
    <scope>IDENTIFICATION BY MASS SPECTROMETRY [LARGE SCALE ANALYSIS]</scope>
</reference>
<reference key="24">
    <citation type="journal article" date="2013" name="J. Proteome Res.">
        <title>Toward a comprehensive characterization of a human cancer cell phosphoproteome.</title>
        <authorList>
            <person name="Zhou H."/>
            <person name="Di Palma S."/>
            <person name="Preisinger C."/>
            <person name="Peng M."/>
            <person name="Polat A.N."/>
            <person name="Heck A.J."/>
            <person name="Mohammed S."/>
        </authorList>
    </citation>
    <scope>PHOSPHORYLATION [LARGE SCALE ANALYSIS] AT SER-75; THR-112; SER-124; SER-159; SER-197; SER-209; SER-709; SER-806 AND SER-822</scope>
    <scope>IDENTIFICATION BY MASS SPECTROMETRY [LARGE SCALE ANALYSIS]</scope>
    <source>
        <tissue>Cervix carcinoma</tissue>
        <tissue>Erythroleukemia</tissue>
    </source>
</reference>
<reference key="25">
    <citation type="journal article" date="2013" name="Nucleic Acids Res.">
        <title>The mammalian TRIM-NHL protein TRIM71/LIN-41 is a repressor of mRNA function.</title>
        <authorList>
            <person name="Loedige I."/>
            <person name="Gaidatzis D."/>
            <person name="Sack R."/>
            <person name="Meister G."/>
            <person name="Filipowicz W."/>
        </authorList>
    </citation>
    <scope>INTERACTION WITH TRIM71</scope>
</reference>
<reference key="26">
    <citation type="journal article" date="2014" name="J. Proteomics">
        <title>An enzyme assisted RP-RPLC approach for in-depth analysis of human liver phosphoproteome.</title>
        <authorList>
            <person name="Bian Y."/>
            <person name="Song C."/>
            <person name="Cheng K."/>
            <person name="Dong M."/>
            <person name="Wang F."/>
            <person name="Huang J."/>
            <person name="Sun D."/>
            <person name="Wang L."/>
            <person name="Ye M."/>
            <person name="Zou H."/>
        </authorList>
    </citation>
    <scope>PHOSPHORYLATION [LARGE SCALE ANALYSIS] AT SER-124 AND SER-229</scope>
    <scope>IDENTIFICATION BY MASS SPECTROMETRY [LARGE SCALE ANALYSIS]</scope>
    <source>
        <tissue>Liver</tissue>
    </source>
</reference>
<reference key="27">
    <citation type="journal article" date="2014" name="Mol. Cell. Proteomics">
        <title>Immunoaffinity enrichment and mass spectrometry analysis of protein methylation.</title>
        <authorList>
            <person name="Guo A."/>
            <person name="Gu H."/>
            <person name="Zhou J."/>
            <person name="Mulhern D."/>
            <person name="Wang Y."/>
            <person name="Lee K.A."/>
            <person name="Yang V."/>
            <person name="Aguiar M."/>
            <person name="Kornhauser J."/>
            <person name="Jia X."/>
            <person name="Ren J."/>
            <person name="Beausoleil S.A."/>
            <person name="Silva J.C."/>
            <person name="Vemulapalli V."/>
            <person name="Bedford M.T."/>
            <person name="Comb M.J."/>
        </authorList>
    </citation>
    <scope>METHYLATION [LARGE SCALE ANALYSIS] AT ARG-796</scope>
    <scope>IDENTIFICATION BY MASS SPECTROMETRY [LARGE SCALE ANALYSIS]</scope>
    <source>
        <tissue>Colon carcinoma</tissue>
    </source>
</reference>
<reference key="28">
    <citation type="journal article" date="2014" name="PLoS Pathog.">
        <title>A novel function of human Pumilio proteins in cytoplasmic sensing of viral infection.</title>
        <authorList>
            <person name="Narita R."/>
            <person name="Takahasi K."/>
            <person name="Murakami E."/>
            <person name="Hirano E."/>
            <person name="Yamamoto S.P."/>
            <person name="Yoneyama M."/>
            <person name="Kato H."/>
            <person name="Fujita T."/>
        </authorList>
    </citation>
    <scope>FUNCTION</scope>
    <scope>SUBCELLULAR LOCATION</scope>
    <scope>INTERACTION WITH DHX58</scope>
</reference>
<reference key="29">
    <citation type="journal article" date="2015" name="Cell">
        <title>Pumilio1 haploinsufficiency leads to SCA1-like neurodegeneration by increasing wild-type Ataxin1 levels.</title>
        <authorList>
            <person name="Gennarino V.A."/>
            <person name="Singh R.K."/>
            <person name="White J.J."/>
            <person name="De Maio A."/>
            <person name="Han K."/>
            <person name="Kim J.Y."/>
            <person name="Jafar-Nejad P."/>
            <person name="di Ronza A."/>
            <person name="Kang H."/>
            <person name="Sayegh L.S."/>
            <person name="Cooper T.A."/>
            <person name="Orr H.T."/>
            <person name="Sillitoe R.V."/>
            <person name="Zoghbi H.Y."/>
        </authorList>
    </citation>
    <scope>FUNCTION</scope>
</reference>
<reference key="30">
    <citation type="journal article" date="2016" name="Cell">
        <title>Noncoding RNA NORAD regulates genomic stability by sequestering PUMILIO proteins.</title>
        <authorList>
            <person name="Lee S."/>
            <person name="Kopp F."/>
            <person name="Chang T.C."/>
            <person name="Sataluri A."/>
            <person name="Chen B."/>
            <person name="Sivakumar S."/>
            <person name="Yu H."/>
            <person name="Xie Y."/>
            <person name="Mendell J.T."/>
        </authorList>
    </citation>
    <scope>FUNCTION</scope>
    <scope>RNA-BINDING</scope>
    <scope>SUBCELLULAR LOCATION</scope>
</reference>
<reference key="31">
    <citation type="journal article" date="2017" name="Mol. Cell">
        <title>A Compendium of RNA-Binding Proteins that Regulate MicroRNA Biogenesis.</title>
        <authorList>
            <person name="Treiber T."/>
            <person name="Treiber N."/>
            <person name="Plessmann U."/>
            <person name="Harlander S."/>
            <person name="Daiss J.L."/>
            <person name="Eichner N."/>
            <person name="Lehmann G."/>
            <person name="Schall K."/>
            <person name="Urlaub H."/>
            <person name="Meister G."/>
        </authorList>
    </citation>
    <scope>FUNCTION</scope>
    <scope>MIRNA-BINDING</scope>
</reference>
<reference key="32">
    <citation type="journal article" date="2001" name="Mol. Cell">
        <title>Crystal structure of a Pumilio homology domain.</title>
        <authorList>
            <person name="Wang X."/>
            <person name="Zamore P.D."/>
            <person name="Hall T.M.T."/>
        </authorList>
    </citation>
    <scope>X-RAY CRYSTALLOGRAPHY (1.9 ANGSTROMS) OF 828-1166</scope>
</reference>
<reference key="33">
    <citation type="journal article" date="2002" name="Cell">
        <title>Modular recognition of RNA by a human pumilio-homology domain.</title>
        <authorList>
            <person name="Wang X."/>
            <person name="McLachlan J."/>
            <person name="Zamore P.D."/>
            <person name="Hall T.M.T."/>
        </authorList>
    </citation>
    <scope>X-RAY CRYSTALLOGRAPHY (2.2 ANGSTROMS) OF 828-1176 IN COMPLEX WITH RNA</scope>
    <scope>MUTAGENESIS OF 1043-ASN-TYR-1044 AND GLN-1047</scope>
</reference>
<reference key="34">
    <citation type="journal article" date="2008" name="Structure">
        <title>Structures of human Pumilio with noncognate RNAs reveal molecular mechanisms for binding promiscuity.</title>
        <authorList>
            <person name="Gupta Y.K."/>
            <person name="Nair D.T."/>
            <person name="Wharton R.P."/>
            <person name="Aggarwal A.K."/>
        </authorList>
    </citation>
    <scope>X-RAY CRYSTALLOGRAPHY (2.32 ANGSTROMS) OF 828-1170 IN COMPLEX WITH CONSENSUS MRNA</scope>
    <scope>FUNCTION</scope>
    <scope>RNA-BINDING</scope>
    <scope>DOMAIN</scope>
</reference>
<reference key="35">
    <citation type="journal article" date="2011" name="J. Biol. Chem.">
        <title>Specific and modular binding code for cytosine recognition in Pumilio/FBF (PUF) RNA-binding domains.</title>
        <authorList>
            <person name="Dong S."/>
            <person name="Wang Y."/>
            <person name="Cassidy-Amstutz C."/>
            <person name="Lu G."/>
            <person name="Bigler R."/>
            <person name="Jezyk M.R."/>
            <person name="Li C."/>
            <person name="Hall T.M."/>
            <person name="Wang Z."/>
        </authorList>
    </citation>
    <scope>X-RAY CRYSTALLOGRAPHY (2.60 ANGSTROMS) OF 828-1176</scope>
    <scope>FUNCTION</scope>
    <scope>RNA-BINDING</scope>
    <scope>DOMAIN</scope>
</reference>
<reference key="36">
    <citation type="journal article" date="2011" name="Structure">
        <title>Alternate modes of cognate RNA recognition by human PUMILIO proteins.</title>
        <authorList>
            <person name="Lu G."/>
            <person name="Hall T.M."/>
        </authorList>
    </citation>
    <scope>X-RAY CRYSTALLOGRAPHY (2.5 ANGSTROMS) OF 828-1176 IN COMPLEX WITH CONSENSUS MRNA</scope>
    <scope>FUNCTION</scope>
    <scope>RNA-BINDING</scope>
    <scope>DOMAIN</scope>
</reference>
<reference key="37">
    <citation type="journal article" date="2018" name="Cell">
        <title>A mild PUM1 mutation is associated with adult-onset ataxia, whereas haploinsufficiency causes developmental delay and seizures.</title>
        <authorList>
            <person name="Gennarino V.A."/>
            <person name="Palmer E.E."/>
            <person name="McDonell L.M."/>
            <person name="Wang L."/>
            <person name="Adamski C.J."/>
            <person name="Koire A."/>
            <person name="See L."/>
            <person name="Chen C.A."/>
            <person name="Schaaf C.P."/>
            <person name="Rosenfeld J.A."/>
            <person name="Panzer J.A."/>
            <person name="Moog U."/>
            <person name="Hao S."/>
            <person name="Bye A."/>
            <person name="Kirk E.P."/>
            <person name="Stankiewicz P."/>
            <person name="Breman A.M."/>
            <person name="McBride A."/>
            <person name="Kandula T."/>
            <person name="Dubbs H.A."/>
            <person name="Macintosh R."/>
            <person name="Cardamone M."/>
            <person name="Zhu Y."/>
            <person name="Ying K."/>
            <person name="Dias K.R."/>
            <person name="Cho M.T."/>
            <person name="Henderson L.B."/>
            <person name="Baskin B."/>
            <person name="Morris P."/>
            <person name="Tao J."/>
            <person name="Cowley M.J."/>
            <person name="Dinger M.E."/>
            <person name="Roscioli T."/>
            <person name="Caluseriu O."/>
            <person name="Suchowersky O."/>
            <person name="Sachdev R.K."/>
            <person name="Lichtarge O."/>
            <person name="Tang J."/>
            <person name="Boycott K.M."/>
            <person name="Holder J.L. Jr."/>
            <person name="Zoghbi H.Y."/>
        </authorList>
    </citation>
    <scope>VARIANTS SCA47 SER-1033 AND TRP-1137</scope>
    <scope>VARIANT NEDMSF TRP-1145</scope>
    <scope>INVOLVEMENT IN SCA47</scope>
    <scope>INVOLVEMENT IN NEDMSF</scope>
    <scope>CHARACTERIZATION OF VARIANTS SCA47 SER-1033; TRP-1137 AND TRP-1145</scope>
    <scope>FUNCTION</scope>
</reference>
<reference key="38">
    <citation type="journal article" date="2019" name="Am. J. Med. Genet. A">
        <title>PADDAS syndrome associated with hair dysplasia caused by a de novo missense variant of PUM1.</title>
        <authorList>
            <person name="Bonnemason-Carrere P."/>
            <person name="Morice-Picard F."/>
            <person name="Pennamen P."/>
            <person name="Arveiler B."/>
            <person name="Fergelot P."/>
            <person name="Goizet C."/>
            <person name="Hellegouarch M."/>
            <person name="Lacombe D."/>
            <person name="Plaisant C."/>
            <person name="Raclet V."/>
            <person name="Rooryck C."/>
            <person name="Lasseaux E."/>
            <person name="Trimouille A."/>
        </authorList>
    </citation>
    <scope>VARIANT NEDMSF TRP-1145</scope>
    <scope>INVOLVEMENT IN NEDMSF</scope>
</reference>
<reference key="39">
    <citation type="journal article" date="2020" name="Am. J. Med. Genet. A">
        <title>PUM1 haploinsufficiency is associated with syndromic neurodevelopmental delay and epilepsy.</title>
        <authorList>
            <person name="Voet J."/>
            <person name="Ceulemans B."/>
            <person name="Kooy F."/>
            <person name="Meuwissen M.E.C."/>
        </authorList>
    </citation>
    <scope>VARIANTS NEDMSF 837-ARG--ILE-1186 DEL AND TRP-1145</scope>
    <scope>INVOLVEMENT IN NEDMSF</scope>
</reference>
<reference key="40">
    <citation type="journal article" date="2022" name="Front. Pediatr.">
        <title>A de novo PUM1 Variant in a Girl With a Dravet-Like Syndrome: Case Report and Literature Review.</title>
        <authorList>
            <person name="Ye Y."/>
            <person name="Hu Z."/>
            <person name="Mai J."/>
            <person name="Chen L."/>
            <person name="Cao D."/>
            <person name="Liao J."/>
            <person name="Duan J."/>
        </authorList>
    </citation>
    <scope>VARIANT NEDMSF TRP-1145</scope>
    <scope>INVOLVEMENT IN NEDMSF</scope>
</reference>